<accession>Q12955</accession>
<accession>B1AQT2</accession>
<accession>B4DIL1</accession>
<accession>E9PE32</accession>
<accession>Q13484</accession>
<accession>Q5CZH9</accession>
<accession>Q5VXD5</accession>
<accession>Q7Z3G4</accession>
<accession>Q9H0P5</accession>
<feature type="chain" id="PRO_0000066886" description="Ankyrin-3">
    <location>
        <begin position="1"/>
        <end position="4377"/>
    </location>
</feature>
<feature type="repeat" description="ANK 1">
    <location>
        <begin position="73"/>
        <end position="102"/>
    </location>
</feature>
<feature type="repeat" description="ANK 2">
    <location>
        <begin position="106"/>
        <end position="135"/>
    </location>
</feature>
<feature type="repeat" description="ANK 3">
    <location>
        <begin position="139"/>
        <end position="168"/>
    </location>
</feature>
<feature type="repeat" description="ANK 4">
    <location>
        <begin position="172"/>
        <end position="201"/>
    </location>
</feature>
<feature type="repeat" description="ANK 5">
    <location>
        <begin position="203"/>
        <end position="230"/>
    </location>
</feature>
<feature type="repeat" description="ANK 6">
    <location>
        <begin position="234"/>
        <end position="263"/>
    </location>
</feature>
<feature type="repeat" description="ANK 7">
    <location>
        <begin position="267"/>
        <end position="296"/>
    </location>
</feature>
<feature type="repeat" description="ANK 8">
    <location>
        <begin position="300"/>
        <end position="329"/>
    </location>
</feature>
<feature type="repeat" description="ANK 9">
    <location>
        <begin position="333"/>
        <end position="362"/>
    </location>
</feature>
<feature type="repeat" description="ANK 10">
    <location>
        <begin position="366"/>
        <end position="395"/>
    </location>
</feature>
<feature type="repeat" description="ANK 11">
    <location>
        <begin position="399"/>
        <end position="428"/>
    </location>
</feature>
<feature type="repeat" description="ANK 12">
    <location>
        <begin position="432"/>
        <end position="461"/>
    </location>
</feature>
<feature type="repeat" description="ANK 13">
    <location>
        <begin position="465"/>
        <end position="494"/>
    </location>
</feature>
<feature type="repeat" description="ANK 14">
    <location>
        <begin position="498"/>
        <end position="527"/>
    </location>
</feature>
<feature type="repeat" description="ANK 15">
    <location>
        <begin position="531"/>
        <end position="560"/>
    </location>
</feature>
<feature type="repeat" description="ANK 16">
    <location>
        <begin position="564"/>
        <end position="593"/>
    </location>
</feature>
<feature type="repeat" description="ANK 17">
    <location>
        <begin position="597"/>
        <end position="626"/>
    </location>
</feature>
<feature type="repeat" description="ANK 18">
    <location>
        <begin position="630"/>
        <end position="659"/>
    </location>
</feature>
<feature type="repeat" description="ANK 19">
    <location>
        <begin position="663"/>
        <end position="692"/>
    </location>
</feature>
<feature type="repeat" description="ANK 20">
    <location>
        <begin position="696"/>
        <end position="725"/>
    </location>
</feature>
<feature type="repeat" description="ANK 21">
    <location>
        <begin position="729"/>
        <end position="758"/>
    </location>
</feature>
<feature type="repeat" description="ANK 22">
    <location>
        <begin position="762"/>
        <end position="791"/>
    </location>
</feature>
<feature type="repeat" description="ANK 23">
    <location>
        <begin position="795"/>
        <end position="825"/>
    </location>
</feature>
<feature type="domain" description="ZU5 1" evidence="5">
    <location>
        <begin position="984"/>
        <end position="1139"/>
    </location>
</feature>
<feature type="domain" description="ZU5 2" evidence="5">
    <location>
        <begin position="1141"/>
        <end position="1288"/>
    </location>
</feature>
<feature type="domain" description="Death" evidence="4">
    <location>
        <begin position="4090"/>
        <end position="4174"/>
    </location>
</feature>
<feature type="region of interest" description="Disordered" evidence="6">
    <location>
        <begin position="1"/>
        <end position="44"/>
    </location>
</feature>
<feature type="region of interest" description="UPA domain" evidence="1">
    <location>
        <begin position="1273"/>
        <end position="1407"/>
    </location>
</feature>
<feature type="region of interest" description="Disordered" evidence="6">
    <location>
        <begin position="1519"/>
        <end position="1540"/>
    </location>
</feature>
<feature type="region of interest" description="Disordered" evidence="6">
    <location>
        <begin position="1968"/>
        <end position="1987"/>
    </location>
</feature>
<feature type="region of interest" description="Disordered" evidence="6">
    <location>
        <begin position="2107"/>
        <end position="2159"/>
    </location>
</feature>
<feature type="region of interest" description="Disordered" evidence="6">
    <location>
        <begin position="2176"/>
        <end position="2245"/>
    </location>
</feature>
<feature type="region of interest" description="Disordered" evidence="6">
    <location>
        <begin position="2299"/>
        <end position="2322"/>
    </location>
</feature>
<feature type="region of interest" description="Disordered" evidence="6">
    <location>
        <begin position="2383"/>
        <end position="2433"/>
    </location>
</feature>
<feature type="region of interest" description="Disordered" evidence="6">
    <location>
        <begin position="2474"/>
        <end position="2508"/>
    </location>
</feature>
<feature type="region of interest" description="Disordered" evidence="6">
    <location>
        <begin position="2588"/>
        <end position="2751"/>
    </location>
</feature>
<feature type="region of interest" description="Disordered" evidence="6">
    <location>
        <begin position="2795"/>
        <end position="2824"/>
    </location>
</feature>
<feature type="region of interest" description="Disordered" evidence="6">
    <location>
        <begin position="3036"/>
        <end position="3067"/>
    </location>
</feature>
<feature type="region of interest" description="Disordered" evidence="6">
    <location>
        <begin position="3131"/>
        <end position="3272"/>
    </location>
</feature>
<feature type="region of interest" description="Disordered" evidence="6">
    <location>
        <begin position="3298"/>
        <end position="3516"/>
    </location>
</feature>
<feature type="region of interest" description="Disordered" evidence="6">
    <location>
        <begin position="3538"/>
        <end position="3607"/>
    </location>
</feature>
<feature type="region of interest" description="Disordered" evidence="6">
    <location>
        <begin position="3635"/>
        <end position="3718"/>
    </location>
</feature>
<feature type="region of interest" description="Disordered" evidence="6">
    <location>
        <begin position="3868"/>
        <end position="3897"/>
    </location>
</feature>
<feature type="region of interest" description="Disordered" evidence="6">
    <location>
        <begin position="4019"/>
        <end position="4090"/>
    </location>
</feature>
<feature type="region of interest" description="Disordered" evidence="6">
    <location>
        <begin position="4251"/>
        <end position="4298"/>
    </location>
</feature>
<feature type="region of interest" description="Disordered" evidence="6">
    <location>
        <begin position="4323"/>
        <end position="4377"/>
    </location>
</feature>
<feature type="compositionally biased region" description="Basic residues" evidence="6">
    <location>
        <begin position="25"/>
        <end position="38"/>
    </location>
</feature>
<feature type="compositionally biased region" description="Low complexity" evidence="6">
    <location>
        <begin position="1519"/>
        <end position="1539"/>
    </location>
</feature>
<feature type="compositionally biased region" description="Basic and acidic residues" evidence="6">
    <location>
        <begin position="1977"/>
        <end position="1986"/>
    </location>
</feature>
<feature type="compositionally biased region" description="Basic and acidic residues" evidence="6">
    <location>
        <begin position="2115"/>
        <end position="2136"/>
    </location>
</feature>
<feature type="compositionally biased region" description="Polar residues" evidence="6">
    <location>
        <begin position="2137"/>
        <end position="2146"/>
    </location>
</feature>
<feature type="compositionally biased region" description="Basic and acidic residues" evidence="6">
    <location>
        <begin position="2299"/>
        <end position="2308"/>
    </location>
</feature>
<feature type="compositionally biased region" description="Acidic residues" evidence="6">
    <location>
        <begin position="2390"/>
        <end position="2399"/>
    </location>
</feature>
<feature type="compositionally biased region" description="Polar residues" evidence="6">
    <location>
        <begin position="2407"/>
        <end position="2417"/>
    </location>
</feature>
<feature type="compositionally biased region" description="Basic and acidic residues" evidence="6">
    <location>
        <begin position="2497"/>
        <end position="2508"/>
    </location>
</feature>
<feature type="compositionally biased region" description="Basic and acidic residues" evidence="6">
    <location>
        <begin position="2588"/>
        <end position="2612"/>
    </location>
</feature>
<feature type="compositionally biased region" description="Low complexity" evidence="6">
    <location>
        <begin position="2622"/>
        <end position="2631"/>
    </location>
</feature>
<feature type="compositionally biased region" description="Polar residues" evidence="6">
    <location>
        <begin position="2706"/>
        <end position="2716"/>
    </location>
</feature>
<feature type="compositionally biased region" description="Basic and acidic residues" evidence="6">
    <location>
        <begin position="2720"/>
        <end position="2742"/>
    </location>
</feature>
<feature type="compositionally biased region" description="Polar residues" evidence="6">
    <location>
        <begin position="2796"/>
        <end position="2807"/>
    </location>
</feature>
<feature type="compositionally biased region" description="Polar residues" evidence="6">
    <location>
        <begin position="3154"/>
        <end position="3186"/>
    </location>
</feature>
<feature type="compositionally biased region" description="Polar residues" evidence="6">
    <location>
        <begin position="3214"/>
        <end position="3224"/>
    </location>
</feature>
<feature type="compositionally biased region" description="Basic and acidic residues" evidence="6">
    <location>
        <begin position="3227"/>
        <end position="3242"/>
    </location>
</feature>
<feature type="compositionally biased region" description="Basic and acidic residues" evidence="6">
    <location>
        <begin position="3335"/>
        <end position="3361"/>
    </location>
</feature>
<feature type="compositionally biased region" description="Polar residues" evidence="6">
    <location>
        <begin position="3377"/>
        <end position="3402"/>
    </location>
</feature>
<feature type="compositionally biased region" description="Acidic residues" evidence="6">
    <location>
        <begin position="3409"/>
        <end position="3428"/>
    </location>
</feature>
<feature type="compositionally biased region" description="Basic and acidic residues" evidence="6">
    <location>
        <begin position="3465"/>
        <end position="3481"/>
    </location>
</feature>
<feature type="compositionally biased region" description="Basic and acidic residues" evidence="6">
    <location>
        <begin position="3549"/>
        <end position="3575"/>
    </location>
</feature>
<feature type="compositionally biased region" description="Low complexity" evidence="6">
    <location>
        <begin position="3576"/>
        <end position="3598"/>
    </location>
</feature>
<feature type="compositionally biased region" description="Basic and acidic residues" evidence="6">
    <location>
        <begin position="3637"/>
        <end position="3651"/>
    </location>
</feature>
<feature type="compositionally biased region" description="Polar residues" evidence="6">
    <location>
        <begin position="3654"/>
        <end position="3669"/>
    </location>
</feature>
<feature type="compositionally biased region" description="Polar residues" evidence="6">
    <location>
        <begin position="3676"/>
        <end position="3713"/>
    </location>
</feature>
<feature type="compositionally biased region" description="Polar residues" evidence="6">
    <location>
        <begin position="3880"/>
        <end position="3897"/>
    </location>
</feature>
<feature type="compositionally biased region" description="Polar residues" evidence="6">
    <location>
        <begin position="4033"/>
        <end position="4052"/>
    </location>
</feature>
<feature type="compositionally biased region" description="Basic and acidic residues" evidence="6">
    <location>
        <begin position="4053"/>
        <end position="4076"/>
    </location>
</feature>
<feature type="compositionally biased region" description="Polar residues" evidence="6">
    <location>
        <begin position="4268"/>
        <end position="4277"/>
    </location>
</feature>
<feature type="compositionally biased region" description="Basic and acidic residues" evidence="6">
    <location>
        <begin position="4337"/>
        <end position="4347"/>
    </location>
</feature>
<feature type="compositionally biased region" description="Basic residues" evidence="6">
    <location>
        <begin position="4362"/>
        <end position="4377"/>
    </location>
</feature>
<feature type="modified residue" description="Phosphoserine" evidence="25">
    <location>
        <position position="39"/>
    </location>
</feature>
<feature type="modified residue" description="Phosphoserine" evidence="3">
    <location>
        <position position="623"/>
    </location>
</feature>
<feature type="modified residue" description="Phosphoserine" evidence="25">
    <location>
        <position position="847"/>
    </location>
</feature>
<feature type="modified residue" description="Phosphoserine" evidence="3">
    <location>
        <position position="861"/>
    </location>
</feature>
<feature type="modified residue" description="Phosphoserine" evidence="2">
    <location>
        <position position="867"/>
    </location>
</feature>
<feature type="modified residue" description="Phosphoserine" evidence="3">
    <location>
        <position position="913"/>
    </location>
</feature>
<feature type="modified residue" description="Phosphoserine" evidence="3">
    <location>
        <position position="916"/>
    </location>
</feature>
<feature type="modified residue" description="Phosphoserine" evidence="2">
    <location>
        <position position="922"/>
    </location>
</feature>
<feature type="modified residue" description="Phosphoserine" evidence="3">
    <location>
        <position position="957"/>
    </location>
</feature>
<feature type="modified residue" description="Phosphoserine" evidence="3">
    <location>
        <position position="959"/>
    </location>
</feature>
<feature type="modified residue" description="Phosphoserine" evidence="2">
    <location>
        <position position="1113"/>
    </location>
</feature>
<feature type="modified residue" description="Phosphoserine" evidence="25">
    <location>
        <position position="1445"/>
    </location>
</feature>
<feature type="modified residue" description="Phosphoserine" evidence="26">
    <location>
        <position position="1459"/>
    </location>
</feature>
<feature type="modified residue" description="Phosphoserine" evidence="2">
    <location>
        <position position="1470"/>
    </location>
</feature>
<feature type="modified residue" description="Phosphoserine" evidence="2">
    <location>
        <position position="1622"/>
    </location>
</feature>
<feature type="modified residue" description="Phosphoserine" evidence="2">
    <location>
        <position position="1625"/>
    </location>
</feature>
<feature type="modified residue" description="Phosphoserine" evidence="3">
    <location>
        <position position="1984"/>
    </location>
</feature>
<feature type="modified residue" description="Phosphoserine" evidence="3">
    <location>
        <position position="2111"/>
    </location>
</feature>
<feature type="modified residue" description="Phosphoserine" evidence="3">
    <location>
        <position position="2123"/>
    </location>
</feature>
<feature type="modified residue" description="Phosphoserine" evidence="3">
    <location>
        <position position="2126"/>
    </location>
</feature>
<feature type="modified residue" description="Phosphoserine" evidence="2">
    <location>
        <position position="4211"/>
    </location>
</feature>
<feature type="modified residue" description="Phosphoserine" evidence="27">
    <location>
        <position position="4229"/>
    </location>
</feature>
<feature type="modified residue" description="Phosphoserine" evidence="27">
    <location>
        <position position="4290"/>
    </location>
</feature>
<feature type="modified residue" description="Phosphoserine" evidence="25 26 27">
    <location>
        <position position="4298"/>
    </location>
</feature>
<feature type="modified residue" description="Phosphoserine" evidence="26">
    <location>
        <position position="4350"/>
    </location>
</feature>
<feature type="splice variant" id="VSP_046885" description="In isoform 4." evidence="17">
    <location>
        <begin position="1"/>
        <end position="866"/>
    </location>
</feature>
<feature type="splice variant" id="VSP_044348" description="In isoform 3." evidence="19">
    <original>MAHAASQLKKNRDLEINAEEEPEKKRKHRKRSRDRKK</original>
    <variation>MASSASSSPAGTEDSAPAQGGFGSDYSRSSR</variation>
    <location>
        <begin position="1"/>
        <end position="37"/>
    </location>
</feature>
<feature type="splice variant" id="VSP_044349" description="In isoform 2." evidence="18">
    <original>MAHAASQLKKNRDLEINAEEEPEKKRKHRKRSRDRK</original>
    <variation>MSEEPKEKNAKPAHRKRKG</variation>
    <location>
        <begin position="1"/>
        <end position="36"/>
    </location>
</feature>
<feature type="splice variant" id="VSP_053753" description="In isoform 5." evidence="21">
    <original>MAHAAS</original>
    <variation>MNLRCD</variation>
    <location>
        <begin position="1"/>
        <end position="6"/>
    </location>
</feature>
<feature type="splice variant" id="VSP_053754" description="In isoform 5." evidence="21">
    <location>
        <begin position="7"/>
        <end position="385"/>
    </location>
</feature>
<feature type="splice variant" id="VSP_053755" description="In isoform 5." evidence="21">
    <location>
        <begin position="850"/>
        <end position="870"/>
    </location>
</feature>
<feature type="splice variant" id="VSP_046886" description="In isoform 4." evidence="17">
    <original>SDVEEG</original>
    <variation>MALPQS</variation>
    <location>
        <begin position="867"/>
        <end position="872"/>
    </location>
</feature>
<feature type="splice variant" id="VSP_044350" description="In isoform 2." evidence="18">
    <original>G</original>
    <variation>GNRCTWYKIPKVQEFTVKS</variation>
    <location>
        <position position="872"/>
    </location>
</feature>
<feature type="splice variant" id="VSP_053756" description="In isoform 5." evidence="21">
    <location>
        <begin position="913"/>
        <end position="918"/>
    </location>
</feature>
<feature type="splice variant" id="VSP_053757" description="In isoform 5." evidence="21">
    <original>MVEGEGLA</original>
    <variation>HGERRGIS</variation>
    <location>
        <begin position="1036"/>
        <end position="1043"/>
    </location>
</feature>
<feature type="splice variant" id="VSP_044351" description="In isoform 2, isoform 3, isoform 4 and isoform 5." evidence="17 18 19 21">
    <location>
        <begin position="1442"/>
        <end position="1450"/>
    </location>
</feature>
<feature type="splice variant" id="VSP_044352" description="In isoform 2, isoform 3 and isoform 4." evidence="17 18 19">
    <location>
        <begin position="1478"/>
        <end position="4081"/>
    </location>
</feature>
<feature type="splice variant" id="VSP_053758" description="In isoform 5." evidence="21">
    <original>IERSTGATRSLPTTYSYKPFFSTRPYQSWTTAPITVPGPAKSGFTSLSSSSSNTPSASPLKSIWSVSTPSPIKSTLGASTTSSVKSISDVASPIRSFRTMSSPIKTVVSQSPYNIQVSSGTLARAPAVTEATPLKGLASNSTFSSRTSPVTTAGSLLERSSITMTPPASPKSNINMYSSSLPFKSIITSAAPLISSPLKSVVSPVKSAVDVISSAKITMASSLSSPVKQMPGHAEVALVNGSISPLKYPSSSTLINGCKATATLQEKISSATNSVSSVVSAATDTVEKVFSTTTAMPFSPLRSYVSAAPSAFQSLRTPSASALYTSLGSSISATTSSVTSSIITVPVYSVVNVLPEPALKKLPDSNSFTKSAAALLSPIKTLTTETHPQPHFSRTSSPVKSSL</original>
    <variation>TSCTVKVRKSQLKEVCKHSIEYFKGISGETLKLVDRLSEEEKKMQSELSDEEESTSRNTSLSETSRGGQPSVTTKSARDKKTEAAPLKSKSEKAGSEKRSSRRTGPQSPCERTDIRMAIVADHLGLSWTELARELNFSVDEINQIRVENPNSLISQSFMLLKKWVTRDGKNATTDALTSVLTKINRIDIVTLLEGPIFDYGNISGTRSFADENNVFHDPVDGWQNETSSGNLESCAQARRVTGGLLDRLDDSPDQCRDSITSYLKGEAGKFEANGSHTEITPEAKTKSYFPESQNDVGKQSTKETLKPKIHGSGHVEEPASPLAAYQKSLEETSKLSKLIIEETKPCVPVSMKKMSRTSPADGKPRLSLHEEEGSSGSEQKQGEGFKVKTKKEIRHVEKKSHS</variation>
    <location>
        <begin position="1478"/>
        <end position="1880"/>
    </location>
</feature>
<feature type="splice variant" id="VSP_053759" description="In isoform 5." evidence="21">
    <location>
        <begin position="1881"/>
        <end position="4377"/>
    </location>
</feature>
<feature type="splice variant" id="VSP_044353" description="In isoform 2, isoform 3 and isoform 4." evidence="17 18 19">
    <original>G</original>
    <variation>S</variation>
    <location>
        <position position="4082"/>
    </location>
</feature>
<feature type="splice variant" id="VSP_044354" description="In isoform 2, isoform 3 and isoform 4." evidence="17 18 19">
    <original>G</original>
    <variation>GYPSLQVELETPTGLHYTPPTPFQQDDYFSDISSIESPLRTPSRLSDGLVPSQGNIEHSADGPPVVTAEDASLEDSKLEDSVPLTEMPEAVDVDESQLENVCLS</variation>
    <location>
        <position position="4199"/>
    </location>
</feature>
<feature type="sequence variant" id="VAR_077912" description="Found in a patient with Gillessen-Kaesbach-Nishimura syndrome; uncertain significance; dbSNP:rs730882195." evidence="14">
    <original>D</original>
    <variation>H</variation>
    <location>
        <position position="968"/>
    </location>
</feature>
<feature type="sequence variant" id="VAR_068702" description="Found in a patient with autism; uncertain significance; dbSNP:rs375050420." evidence="10">
    <original>S</original>
    <variation>A</variation>
    <location>
        <position position="1569"/>
    </location>
</feature>
<feature type="sequence variant" id="VAR_061013" description="In dbSNP:rs59021407.">
    <original>K</original>
    <variation>R</variation>
    <location>
        <position position="2318"/>
    </location>
</feature>
<feature type="sequence variant" id="VAR_059115" description="In dbSNP:rs11599164.">
    <original>H</original>
    <variation>Q</variation>
    <location>
        <position position="2885"/>
    </location>
</feature>
<feature type="sequence variant" id="VAR_061014" description="In dbSNP:rs41274672.">
    <original>Q</original>
    <variation>H</variation>
    <location>
        <position position="2996"/>
    </location>
</feature>
<feature type="sequence variant" id="VAR_059116" description="In dbSNP:rs28932171.">
    <original>I</original>
    <variation>V</variation>
    <location>
        <position position="3117"/>
    </location>
</feature>
<feature type="sequence variant" id="VAR_059117" description="In dbSNP:rs10821668.">
    <original>K</original>
    <variation>R</variation>
    <location>
        <position position="3123"/>
    </location>
</feature>
<feature type="sequence variant" id="VAR_068703" description="Found in a patient with autism; uncertain significance; dbSNP:rs201547988." evidence="10">
    <original>T</original>
    <variation>M</variation>
    <location>
        <position position="3720"/>
    </location>
</feature>
<feature type="sequence variant" id="VAR_068704" description="Found in a patient with autism; uncertain significance; dbSNP:rs769573528." evidence="10">
    <original>T</original>
    <variation>P</variation>
    <location>
        <position position="4255"/>
    </location>
</feature>
<feature type="sequence variant" id="VAR_054333" description="In dbSNP:rs12261793.">
    <original>I</original>
    <variation>V</variation>
    <location>
        <position position="4257"/>
    </location>
</feature>
<feature type="sequence conflict" description="In Ref. 5; CAI56716." evidence="22" ref="5">
    <original>T</original>
    <variation>A</variation>
    <location>
        <position position="197"/>
    </location>
</feature>
<feature type="sequence conflict" description="In Ref. 5; CAD97900." evidence="22" ref="5">
    <original>L</original>
    <variation>P</variation>
    <location>
        <position position="222"/>
    </location>
</feature>
<feature type="sequence conflict" description="In Ref. 5; CAD97900." evidence="22" ref="5">
    <original>I</original>
    <variation>V</variation>
    <location>
        <position position="327"/>
    </location>
</feature>
<feature type="sequence conflict" description="In Ref. 4; BAG58523." evidence="22" ref="4">
    <original>L</original>
    <variation>W</variation>
    <location>
        <position position="338"/>
    </location>
</feature>
<feature type="sequence conflict" description="In Ref. 5; CAD97900." evidence="22" ref="5">
    <original>A</original>
    <variation>T</variation>
    <location>
        <position position="523"/>
    </location>
</feature>
<feature type="sequence conflict" description="In Ref. 5; CAI56716." evidence="22" ref="5">
    <original>L</original>
    <variation>P</variation>
    <location>
        <position position="578"/>
    </location>
</feature>
<feature type="sequence conflict" description="In Ref. 3; CAB66645." evidence="22" ref="3">
    <original>R</original>
    <variation>G</variation>
    <location>
        <position position="921"/>
    </location>
</feature>
<feature type="sequence conflict" description="In Ref. 3; CAB66645." evidence="22" ref="3">
    <original>S</original>
    <variation>P</variation>
    <location>
        <position position="977"/>
    </location>
</feature>
<feature type="sequence conflict" description="In Ref. 5; CAI56716." evidence="22" ref="5">
    <original>D</original>
    <variation>G</variation>
    <location>
        <position position="1237"/>
    </location>
</feature>
<feature type="sequence conflict" description="In Ref. 1; AAA64834." evidence="22" ref="1">
    <original>P</original>
    <variation>R</variation>
    <location>
        <position position="1418"/>
    </location>
</feature>
<feature type="sequence conflict" description="In Ref. 4; BAG58523." evidence="22" ref="4">
    <original>D</original>
    <variation>E</variation>
    <location>
        <position position="1455"/>
    </location>
</feature>
<feature type="sequence conflict" description="In Ref. 1; AAA64834." evidence="22" ref="1">
    <original>F</original>
    <variation>L</variation>
    <location>
        <position position="1574"/>
    </location>
</feature>
<feature type="sequence conflict" description="In Ref. 1; AAA64834." evidence="22" ref="1">
    <original>A</original>
    <variation>R</variation>
    <location>
        <position position="1685"/>
    </location>
</feature>
<feature type="sequence conflict" description="In Ref. 1; AAA64834." evidence="22" ref="1">
    <original>P</original>
    <variation>A</variation>
    <location>
        <position position="1726"/>
    </location>
</feature>
<feature type="sequence conflict" description="In Ref. 1; AAA64834." evidence="22" ref="1">
    <original>ER</original>
    <variation>GG</variation>
    <location>
        <begin position="2062"/>
        <end position="2063"/>
    </location>
</feature>
<feature type="sequence conflict" description="In Ref. 1; AAA64834." evidence="22" ref="1">
    <original>S</original>
    <variation>T</variation>
    <location>
        <position position="2146"/>
    </location>
</feature>
<feature type="sequence conflict" description="In Ref. 1; AAA64834." evidence="22" ref="1">
    <original>H</original>
    <variation>P</variation>
    <location>
        <position position="3919"/>
    </location>
</feature>
<feature type="sequence conflict" description="In Ref. 3; CAB66645." evidence="22" ref="3">
    <original>L</original>
    <variation>F</variation>
    <location>
        <position position="4137"/>
    </location>
</feature>
<feature type="helix" evidence="28">
    <location>
        <begin position="4089"/>
        <end position="4101"/>
    </location>
</feature>
<feature type="helix" evidence="28">
    <location>
        <begin position="4102"/>
        <end position="4104"/>
    </location>
</feature>
<feature type="helix" evidence="28">
    <location>
        <begin position="4105"/>
        <end position="4111"/>
    </location>
</feature>
<feature type="helix" evidence="28">
    <location>
        <begin position="4116"/>
        <end position="4125"/>
    </location>
</feature>
<feature type="helix" evidence="28">
    <location>
        <begin position="4130"/>
        <end position="4145"/>
    </location>
</feature>
<feature type="helix" evidence="28">
    <location>
        <begin position="4146"/>
        <end position="4148"/>
    </location>
</feature>
<feature type="helix" evidence="28">
    <location>
        <begin position="4151"/>
        <end position="4160"/>
    </location>
</feature>
<feature type="helix" evidence="28">
    <location>
        <begin position="4164"/>
        <end position="4171"/>
    </location>
</feature>
<feature type="helix" evidence="28">
    <location>
        <begin position="4173"/>
        <end position="4178"/>
    </location>
</feature>
<feature type="modified residue" description="Phosphoserine" evidence="27">
    <location sequence="Q12955-4">
        <position position="1632"/>
    </location>
</feature>
<feature type="modified residue" description="Phosphoserine" evidence="27">
    <location sequence="Q12955-4">
        <position position="1658"/>
    </location>
</feature>
<feature type="modified residue" description="Phosphoserine" evidence="27">
    <location sequence="Q12955-5">
        <position position="1625"/>
    </location>
</feature>
<feature type="modified residue" description="Phosphoserine" evidence="27">
    <location sequence="Q12955-5">
        <position position="1651"/>
    </location>
</feature>
<feature type="modified residue" description="Phosphoserine" evidence="27">
    <location sequence="Q12955-6">
        <position position="765"/>
    </location>
</feature>
<feature type="modified residue" description="Phosphoserine" evidence="27">
    <location sequence="Q12955-6">
        <position position="791"/>
    </location>
</feature>
<feature type="modified residue" description="Phosphoserine" evidence="27">
    <location sequence="Q12955-7">
        <position position="468"/>
    </location>
</feature>
<evidence type="ECO:0000250" key="1"/>
<evidence type="ECO:0000250" key="2">
    <source>
        <dbReference type="UniProtKB" id="G5E8K5"/>
    </source>
</evidence>
<evidence type="ECO:0000250" key="3">
    <source>
        <dbReference type="UniProtKB" id="O70511"/>
    </source>
</evidence>
<evidence type="ECO:0000255" key="4">
    <source>
        <dbReference type="PROSITE-ProRule" id="PRU00064"/>
    </source>
</evidence>
<evidence type="ECO:0000255" key="5">
    <source>
        <dbReference type="PROSITE-ProRule" id="PRU00485"/>
    </source>
</evidence>
<evidence type="ECO:0000256" key="6">
    <source>
        <dbReference type="SAM" id="MobiDB-lite"/>
    </source>
</evidence>
<evidence type="ECO:0000269" key="7">
    <source>
    </source>
</evidence>
<evidence type="ECO:0000269" key="8">
    <source>
    </source>
</evidence>
<evidence type="ECO:0000269" key="9">
    <source>
    </source>
</evidence>
<evidence type="ECO:0000269" key="10">
    <source>
    </source>
</evidence>
<evidence type="ECO:0000269" key="11">
    <source>
    </source>
</evidence>
<evidence type="ECO:0000269" key="12">
    <source>
    </source>
</evidence>
<evidence type="ECO:0000269" key="13">
    <source>
    </source>
</evidence>
<evidence type="ECO:0000269" key="14">
    <source>
    </source>
</evidence>
<evidence type="ECO:0000269" key="15">
    <source>
    </source>
</evidence>
<evidence type="ECO:0000269" key="16">
    <source>
    </source>
</evidence>
<evidence type="ECO:0000303" key="17">
    <source>
    </source>
</evidence>
<evidence type="ECO:0000303" key="18">
    <source>
    </source>
</evidence>
<evidence type="ECO:0000303" key="19">
    <source>
    </source>
</evidence>
<evidence type="ECO:0000303" key="20">
    <source>
    </source>
</evidence>
<evidence type="ECO:0000303" key="21">
    <source>
    </source>
</evidence>
<evidence type="ECO:0000305" key="22"/>
<evidence type="ECO:0000305" key="23">
    <source>
    </source>
</evidence>
<evidence type="ECO:0000312" key="24">
    <source>
        <dbReference type="HGNC" id="HGNC:494"/>
    </source>
</evidence>
<evidence type="ECO:0007744" key="25">
    <source>
    </source>
</evidence>
<evidence type="ECO:0007744" key="26">
    <source>
    </source>
</evidence>
<evidence type="ECO:0007744" key="27">
    <source>
    </source>
</evidence>
<evidence type="ECO:0007829" key="28">
    <source>
        <dbReference type="PDB" id="4O6X"/>
    </source>
</evidence>
<comment type="function">
    <text evidence="2 3 12 15">Membrane-cytoskeleton linker. May participate in the maintenance/targeting of ion channels and cell adhesion molecules at the nodes of Ranvier and axonal initial segments (PubMed:7836469). In skeletal muscle, required for costamere localization of DMD and betaDAG1 (By similarity). Regulates KCNA1 channel activity in function of dietary Mg(2+) levels, and thereby contributes to the regulation of renal Mg(2+) reabsorption (PubMed:23903368). Required for intracellular adhesion and junctional conductance in myocytes, potentially via stabilization of GJA1/CX43 protein abundance and promotion of PKP2, GJA1/CX43, and SCN5A/Nav1.5 localization to cell-cell junctions (By similarity).</text>
</comment>
<comment type="function">
    <molecule>Isoform 5</molecule>
    <text evidence="23">May be part of a Golgi-specific membrane cytoskeleton in association with beta-spectrin.</text>
</comment>
<comment type="subunit">
    <text evidence="2 3 7 8 9 12 13">Directly interacts with DMD and betaDAG1. This interaction does not interfere with binding between DMD and betaDAG1. It is also required for DMD and betaDAG1 retention at costameres (By similarity). Interacts (via N-terminal ANK repeats) with SCHIP1 isoform 5 (via C-terminus); this interaction is required for the localization at axon initial segments (AISs) and nodes of Ranvier (NRs) (By similarity). May be a constituent of a NFASC/NRCAM/ankyrin G complex. Interacts with RHBG (PubMed:15611082). Interacts with PLEC and FLNC (PubMed:21223964). Interacts with KCNA1; this inhibits channel activity (PubMed:23903368). Interacts (via ANK repeats) with IQCJ-SCHIP1; required for IQCJ-SCHIP1 localization at axon initial segments (AIS) and nodes of Ranvier (PubMed:25950943). Interacts with SCHIP1 (PubMed:25950943). Interacts with SCN5A (PubMed:15579534). Interacts with PKP2 and GJA1/CX43 (By similarity).</text>
</comment>
<comment type="interaction">
    <interactant intactId="EBI-2691178">
        <id>Q12955</id>
    </interactant>
    <interactant intactId="EBI-15816315">
        <id>O00203-1</id>
        <label>AP3B1</label>
    </interactant>
    <organismsDiffer>false</organismsDiffer>
    <experiments>2</experiments>
</comment>
<comment type="interaction">
    <interactant intactId="EBI-2691178">
        <id>Q12955</id>
    </interactant>
    <interactant intactId="EBI-3921741">
        <id>Q92565</id>
        <label>RAPGEF5</label>
    </interactant>
    <organismsDiffer>false</organismsDiffer>
    <experiments>2</experiments>
</comment>
<comment type="interaction">
    <interactant intactId="EBI-2691178">
        <id>Q12955</id>
    </interactant>
    <interactant intactId="EBI-1040141">
        <id>Q15796</id>
        <label>SMAD2</label>
    </interactant>
    <organismsDiffer>false</organismsDiffer>
    <experiments>2</experiments>
</comment>
<comment type="interaction">
    <interactant intactId="EBI-12154305">
        <id>Q12955-5</id>
    </interactant>
    <interactant intactId="EBI-8641936">
        <id>Q15742</id>
        <label>NAB2</label>
    </interactant>
    <organismsDiffer>false</organismsDiffer>
    <experiments>3</experiments>
</comment>
<comment type="subcellular location">
    <subcellularLocation>
        <location evidence="9">Cytoplasm</location>
        <location evidence="9">Cytoskeleton</location>
    </subcellularLocation>
    <subcellularLocation>
        <location evidence="3">Cell projection</location>
        <location evidence="3">Axon</location>
    </subcellularLocation>
    <subcellularLocation>
        <location evidence="9">Cell membrane</location>
        <location evidence="9">Sarcolemma</location>
    </subcellularLocation>
    <subcellularLocation>
        <location evidence="3">Postsynaptic cell membrane</location>
    </subcellularLocation>
    <subcellularLocation>
        <location evidence="2">Lysosome</location>
    </subcellularLocation>
    <subcellularLocation>
        <location evidence="3">Cell membrane</location>
        <location evidence="3">Sarcolemma</location>
        <location evidence="3">T-tubule</location>
    </subcellularLocation>
    <text evidence="2 3">In skeletal muscle, localized at costameres and neuromuscular junctions. In macrophages, associated with lysosomes.</text>
</comment>
<comment type="subcellular location">
    <molecule>Isoform 5</molecule>
    <subcellularLocation>
        <location evidence="16">Cytoplasm</location>
        <location evidence="16">Cytoskeleton</location>
    </subcellularLocation>
    <subcellularLocation>
        <location evidence="16">Golgi apparatus</location>
    </subcellularLocation>
</comment>
<comment type="alternative products">
    <event type="alternative splicing"/>
    <isoform>
        <id>Q12955-3</id>
        <name>1</name>
        <sequence type="displayed"/>
    </isoform>
    <isoform>
        <id>Q12955-4</id>
        <name>2</name>
        <sequence type="described" ref="VSP_044349 VSP_044350 VSP_044351 VSP_044352 VSP_044353 VSP_044354"/>
    </isoform>
    <isoform>
        <id>Q12955-5</id>
        <name>3</name>
        <sequence type="described" ref="VSP_044348 VSP_044351 VSP_044352 VSP_044353 VSP_044354"/>
    </isoform>
    <isoform>
        <id>Q12955-6</id>
        <name>4</name>
        <sequence type="described" ref="VSP_046885 VSP_046886 VSP_044351 VSP_044352 VSP_044353 VSP_044354"/>
    </isoform>
    <isoform>
        <id>Q12955-7</id>
        <name>5</name>
        <name>AnkG119</name>
        <name>Golgi ankyrin</name>
        <sequence type="described" ref="VSP_053753 VSP_053754 VSP_053755 VSP_053756 VSP_053757 VSP_044351 VSP_053758 VSP_053759"/>
    </isoform>
</comment>
<comment type="tissue specificity">
    <text evidence="9 15">Expressed in brain, neurons, muscles and other tissues.</text>
</comment>
<comment type="developmental stage">
    <text evidence="9">Up-regulated during muscle cell differentiation.</text>
</comment>
<comment type="domain">
    <text evidence="1">The tandem configuration of the two ZU5 and the UPA domains forms a structural supramodule termed ZZU. ZU5-1 mediates interaction with beta-spectrin, and the ZU5-1/UPA interface is required for ankyrin's function other than binding to spectrin (By similarity).</text>
</comment>
<comment type="disease">
    <text evidence="10">Genetic variations in ANK3 may be associated with autism spectrum disorders susceptibility.</text>
</comment>
<comment type="disease">
    <disease id="DI-03943">
        <name>Intellectual developmental disorder, autosomal recessive 37</name>
        <acronym>MRT37</acronym>
        <description>A disorder characterized by significantly below average general intellectual functioning associated with impairments in adaptive behavior and manifested during the developmental period. MRT37 patients manifest delayed global development with speech delay, hypotonia, spasticity, and a sleep disorder. Severe behavioral abnormalities include aggression, hyperactivity, and grinding of the teeth.</description>
        <dbReference type="MIM" id="615493"/>
    </disease>
    <text evidence="11">The disease is caused by variants affecting the gene represented in this entry. A homozygous deletion in ANK3 predicted to result in frameshift and premature truncation, has been shown to be the cause of moderate intellectual disability, an ADHD-like phenotype and behavioral problems in a consanguineous family (PubMed:23390136).</text>
</comment>
<comment type="miscellaneous">
    <molecule>Isoform 5</molecule>
    <text evidence="22">Avidly binds beta spectrin.</text>
</comment>
<comment type="sequence caution" evidence="22">
    <molecule>Isoform 4</molecule>
    <conflict type="frameshift">
        <sequence resource="EMBL-CDS" id="CAB66645"/>
    </conflict>
</comment>
<comment type="online information" name="Wikipedia">
    <link uri="https://en.wikipedia.org/wiki/Ankyrin"/>
    <text>Ankyrin entry</text>
</comment>
<reference key="1">
    <citation type="journal article" date="1995" name="J. Biol. Chem.">
        <title>AnkyrinG. A new ankyrin gene with neural-specific isoforms localized at the axonal initial segment and node of Ranvier.</title>
        <authorList>
            <person name="Kordeli E."/>
            <person name="Lambert S."/>
            <person name="Bennett V."/>
        </authorList>
    </citation>
    <scope>NUCLEOTIDE SEQUENCE [MRNA] (ISOFORM 1)</scope>
    <scope>FUNCTION</scope>
    <scope>TISSUE SPECIFICITY</scope>
    <source>
        <tissue>Brain stem</tissue>
    </source>
</reference>
<reference key="2">
    <citation type="journal article" date="1996" name="J. Cell Biol.">
        <title>Identification of a small cytoplasmic ankyrin (AnkG119) in the kidney and muscle that binds beta I sigma spectrin and associates with the Golgi apparatus.</title>
        <authorList>
            <person name="Devarajan P."/>
            <person name="Stabach P.R."/>
            <person name="Mann A.S."/>
            <person name="Ardito T."/>
            <person name="Kashgarian M."/>
            <person name="Morrow J.S."/>
        </authorList>
    </citation>
    <scope>NUCLEOTIDE SEQUENCE [MRNA] (ISOFORM 5)</scope>
    <scope>FUNCTION (ISOFORM 5)</scope>
    <scope>SUBCELLULAR LOCATION (ISOFORM 5)</scope>
    <source>
        <tissue>Kidney</tissue>
    </source>
</reference>
<reference key="3">
    <citation type="journal article" date="2001" name="Genome Res.">
        <title>Towards a catalog of human genes and proteins: sequencing and analysis of 500 novel complete protein coding human cDNAs.</title>
        <authorList>
            <person name="Wiemann S."/>
            <person name="Weil B."/>
            <person name="Wellenreuther R."/>
            <person name="Gassenhuber J."/>
            <person name="Glassl S."/>
            <person name="Ansorge W."/>
            <person name="Boecher M."/>
            <person name="Bloecker H."/>
            <person name="Bauersachs S."/>
            <person name="Blum H."/>
            <person name="Lauber J."/>
            <person name="Duesterhoeft A."/>
            <person name="Beyer A."/>
            <person name="Koehrer K."/>
            <person name="Strack N."/>
            <person name="Mewes H.-W."/>
            <person name="Ottenwaelder B."/>
            <person name="Obermaier B."/>
            <person name="Tampe J."/>
            <person name="Heubner D."/>
            <person name="Wambutt R."/>
            <person name="Korn B."/>
            <person name="Klein M."/>
            <person name="Poustka A."/>
        </authorList>
    </citation>
    <scope>NUCLEOTIDE SEQUENCE [LARGE SCALE MRNA] (ISOFORM 4)</scope>
    <source>
        <tissue>Kidney</tissue>
    </source>
</reference>
<reference key="4">
    <citation type="journal article" date="2004" name="Nat. Genet.">
        <title>Complete sequencing and characterization of 21,243 full-length human cDNAs.</title>
        <authorList>
            <person name="Ota T."/>
            <person name="Suzuki Y."/>
            <person name="Nishikawa T."/>
            <person name="Otsuki T."/>
            <person name="Sugiyama T."/>
            <person name="Irie R."/>
            <person name="Wakamatsu A."/>
            <person name="Hayashi K."/>
            <person name="Sato H."/>
            <person name="Nagai K."/>
            <person name="Kimura K."/>
            <person name="Makita H."/>
            <person name="Sekine M."/>
            <person name="Obayashi M."/>
            <person name="Nishi T."/>
            <person name="Shibahara T."/>
            <person name="Tanaka T."/>
            <person name="Ishii S."/>
            <person name="Yamamoto J."/>
            <person name="Saito K."/>
            <person name="Kawai Y."/>
            <person name="Isono Y."/>
            <person name="Nakamura Y."/>
            <person name="Nagahari K."/>
            <person name="Murakami K."/>
            <person name="Yasuda T."/>
            <person name="Iwayanagi T."/>
            <person name="Wagatsuma M."/>
            <person name="Shiratori A."/>
            <person name="Sudo H."/>
            <person name="Hosoiri T."/>
            <person name="Kaku Y."/>
            <person name="Kodaira H."/>
            <person name="Kondo H."/>
            <person name="Sugawara M."/>
            <person name="Takahashi M."/>
            <person name="Kanda K."/>
            <person name="Yokoi T."/>
            <person name="Furuya T."/>
            <person name="Kikkawa E."/>
            <person name="Omura Y."/>
            <person name="Abe K."/>
            <person name="Kamihara K."/>
            <person name="Katsuta N."/>
            <person name="Sato K."/>
            <person name="Tanikawa M."/>
            <person name="Yamazaki M."/>
            <person name="Ninomiya K."/>
            <person name="Ishibashi T."/>
            <person name="Yamashita H."/>
            <person name="Murakawa K."/>
            <person name="Fujimori K."/>
            <person name="Tanai H."/>
            <person name="Kimata M."/>
            <person name="Watanabe M."/>
            <person name="Hiraoka S."/>
            <person name="Chiba Y."/>
            <person name="Ishida S."/>
            <person name="Ono Y."/>
            <person name="Takiguchi S."/>
            <person name="Watanabe S."/>
            <person name="Yosida M."/>
            <person name="Hotuta T."/>
            <person name="Kusano J."/>
            <person name="Kanehori K."/>
            <person name="Takahashi-Fujii A."/>
            <person name="Hara H."/>
            <person name="Tanase T.-O."/>
            <person name="Nomura Y."/>
            <person name="Togiya S."/>
            <person name="Komai F."/>
            <person name="Hara R."/>
            <person name="Takeuchi K."/>
            <person name="Arita M."/>
            <person name="Imose N."/>
            <person name="Musashino K."/>
            <person name="Yuuki H."/>
            <person name="Oshima A."/>
            <person name="Sasaki N."/>
            <person name="Aotsuka S."/>
            <person name="Yoshikawa Y."/>
            <person name="Matsunawa H."/>
            <person name="Ichihara T."/>
            <person name="Shiohata N."/>
            <person name="Sano S."/>
            <person name="Moriya S."/>
            <person name="Momiyama H."/>
            <person name="Satoh N."/>
            <person name="Takami S."/>
            <person name="Terashima Y."/>
            <person name="Suzuki O."/>
            <person name="Nakagawa S."/>
            <person name="Senoh A."/>
            <person name="Mizoguchi H."/>
            <person name="Goto Y."/>
            <person name="Shimizu F."/>
            <person name="Wakebe H."/>
            <person name="Hishigaki H."/>
            <person name="Watanabe T."/>
            <person name="Sugiyama A."/>
            <person name="Takemoto M."/>
            <person name="Kawakami B."/>
            <person name="Yamazaki M."/>
            <person name="Watanabe K."/>
            <person name="Kumagai A."/>
            <person name="Itakura S."/>
            <person name="Fukuzumi Y."/>
            <person name="Fujimori Y."/>
            <person name="Komiyama M."/>
            <person name="Tashiro H."/>
            <person name="Tanigami A."/>
            <person name="Fujiwara T."/>
            <person name="Ono T."/>
            <person name="Yamada K."/>
            <person name="Fujii Y."/>
            <person name="Ozaki K."/>
            <person name="Hirao M."/>
            <person name="Ohmori Y."/>
            <person name="Kawabata A."/>
            <person name="Hikiji T."/>
            <person name="Kobatake N."/>
            <person name="Inagaki H."/>
            <person name="Ikema Y."/>
            <person name="Okamoto S."/>
            <person name="Okitani R."/>
            <person name="Kawakami T."/>
            <person name="Noguchi S."/>
            <person name="Itoh T."/>
            <person name="Shigeta K."/>
            <person name="Senba T."/>
            <person name="Matsumura K."/>
            <person name="Nakajima Y."/>
            <person name="Mizuno T."/>
            <person name="Morinaga M."/>
            <person name="Sasaki M."/>
            <person name="Togashi T."/>
            <person name="Oyama M."/>
            <person name="Hata H."/>
            <person name="Watanabe M."/>
            <person name="Komatsu T."/>
            <person name="Mizushima-Sugano J."/>
            <person name="Satoh T."/>
            <person name="Shirai Y."/>
            <person name="Takahashi Y."/>
            <person name="Nakagawa K."/>
            <person name="Okumura K."/>
            <person name="Nagase T."/>
            <person name="Nomura N."/>
            <person name="Kikuchi H."/>
            <person name="Masuho Y."/>
            <person name="Yamashita R."/>
            <person name="Nakai K."/>
            <person name="Yada T."/>
            <person name="Nakamura Y."/>
            <person name="Ohara O."/>
            <person name="Isogai T."/>
            <person name="Sugano S."/>
        </authorList>
    </citation>
    <scope>NUCLEOTIDE SEQUENCE [LARGE SCALE MRNA] (ISOFORM 2)</scope>
    <source>
        <tissue>Hippocampus</tissue>
    </source>
</reference>
<reference key="5">
    <citation type="journal article" date="2007" name="BMC Genomics">
        <title>The full-ORF clone resource of the German cDNA consortium.</title>
        <authorList>
            <person name="Bechtel S."/>
            <person name="Rosenfelder H."/>
            <person name="Duda A."/>
            <person name="Schmidt C.P."/>
            <person name="Ernst U."/>
            <person name="Wellenreuther R."/>
            <person name="Mehrle A."/>
            <person name="Schuster C."/>
            <person name="Bahr A."/>
            <person name="Bloecker H."/>
            <person name="Heubner D."/>
            <person name="Hoerlein A."/>
            <person name="Michel G."/>
            <person name="Wedler H."/>
            <person name="Koehrer K."/>
            <person name="Ottenwaelder B."/>
            <person name="Poustka A."/>
            <person name="Wiemann S."/>
            <person name="Schupp I."/>
        </authorList>
    </citation>
    <scope>NUCLEOTIDE SEQUENCE [LARGE SCALE MRNA] (ISOFORM 3)</scope>
    <source>
        <tissue>Cervix</tissue>
        <tissue>Fetal kidney</tissue>
    </source>
</reference>
<reference key="6">
    <citation type="journal article" date="2004" name="Nature">
        <title>The DNA sequence and comparative analysis of human chromosome 10.</title>
        <authorList>
            <person name="Deloukas P."/>
            <person name="Earthrowl M.E."/>
            <person name="Grafham D.V."/>
            <person name="Rubenfield M."/>
            <person name="French L."/>
            <person name="Steward C.A."/>
            <person name="Sims S.K."/>
            <person name="Jones M.C."/>
            <person name="Searle S."/>
            <person name="Scott C."/>
            <person name="Howe K."/>
            <person name="Hunt S.E."/>
            <person name="Andrews T.D."/>
            <person name="Gilbert J.G.R."/>
            <person name="Swarbreck D."/>
            <person name="Ashurst J.L."/>
            <person name="Taylor A."/>
            <person name="Battles J."/>
            <person name="Bird C.P."/>
            <person name="Ainscough R."/>
            <person name="Almeida J.P."/>
            <person name="Ashwell R.I.S."/>
            <person name="Ambrose K.D."/>
            <person name="Babbage A.K."/>
            <person name="Bagguley C.L."/>
            <person name="Bailey J."/>
            <person name="Banerjee R."/>
            <person name="Bates K."/>
            <person name="Beasley H."/>
            <person name="Bray-Allen S."/>
            <person name="Brown A.J."/>
            <person name="Brown J.Y."/>
            <person name="Burford D.C."/>
            <person name="Burrill W."/>
            <person name="Burton J."/>
            <person name="Cahill P."/>
            <person name="Camire D."/>
            <person name="Carter N.P."/>
            <person name="Chapman J.C."/>
            <person name="Clark S.Y."/>
            <person name="Clarke G."/>
            <person name="Clee C.M."/>
            <person name="Clegg S."/>
            <person name="Corby N."/>
            <person name="Coulson A."/>
            <person name="Dhami P."/>
            <person name="Dutta I."/>
            <person name="Dunn M."/>
            <person name="Faulkner L."/>
            <person name="Frankish A."/>
            <person name="Frankland J.A."/>
            <person name="Garner P."/>
            <person name="Garnett J."/>
            <person name="Gribble S."/>
            <person name="Griffiths C."/>
            <person name="Grocock R."/>
            <person name="Gustafson E."/>
            <person name="Hammond S."/>
            <person name="Harley J.L."/>
            <person name="Hart E."/>
            <person name="Heath P.D."/>
            <person name="Ho T.P."/>
            <person name="Hopkins B."/>
            <person name="Horne J."/>
            <person name="Howden P.J."/>
            <person name="Huckle E."/>
            <person name="Hynds C."/>
            <person name="Johnson C."/>
            <person name="Johnson D."/>
            <person name="Kana A."/>
            <person name="Kay M."/>
            <person name="Kimberley A.M."/>
            <person name="Kershaw J.K."/>
            <person name="Kokkinaki M."/>
            <person name="Laird G.K."/>
            <person name="Lawlor S."/>
            <person name="Lee H.M."/>
            <person name="Leongamornlert D.A."/>
            <person name="Laird G."/>
            <person name="Lloyd C."/>
            <person name="Lloyd D.M."/>
            <person name="Loveland J."/>
            <person name="Lovell J."/>
            <person name="McLaren S."/>
            <person name="McLay K.E."/>
            <person name="McMurray A."/>
            <person name="Mashreghi-Mohammadi M."/>
            <person name="Matthews L."/>
            <person name="Milne S."/>
            <person name="Nickerson T."/>
            <person name="Nguyen M."/>
            <person name="Overton-Larty E."/>
            <person name="Palmer S.A."/>
            <person name="Pearce A.V."/>
            <person name="Peck A.I."/>
            <person name="Pelan S."/>
            <person name="Phillimore B."/>
            <person name="Porter K."/>
            <person name="Rice C.M."/>
            <person name="Rogosin A."/>
            <person name="Ross M.T."/>
            <person name="Sarafidou T."/>
            <person name="Sehra H.K."/>
            <person name="Shownkeen R."/>
            <person name="Skuce C.D."/>
            <person name="Smith M."/>
            <person name="Standring L."/>
            <person name="Sycamore N."/>
            <person name="Tester J."/>
            <person name="Thorpe A."/>
            <person name="Torcasso W."/>
            <person name="Tracey A."/>
            <person name="Tromans A."/>
            <person name="Tsolas J."/>
            <person name="Wall M."/>
            <person name="Walsh J."/>
            <person name="Wang H."/>
            <person name="Weinstock K."/>
            <person name="West A.P."/>
            <person name="Willey D.L."/>
            <person name="Whitehead S.L."/>
            <person name="Wilming L."/>
            <person name="Wray P.W."/>
            <person name="Young L."/>
            <person name="Chen Y."/>
            <person name="Lovering R.C."/>
            <person name="Moschonas N.K."/>
            <person name="Siebert R."/>
            <person name="Fechtel K."/>
            <person name="Bentley D."/>
            <person name="Durbin R.M."/>
            <person name="Hubbard T."/>
            <person name="Doucette-Stamm L."/>
            <person name="Beck S."/>
            <person name="Smith D.R."/>
            <person name="Rogers J."/>
        </authorList>
    </citation>
    <scope>NUCLEOTIDE SEQUENCE [LARGE SCALE GENOMIC DNA]</scope>
</reference>
<reference key="7">
    <citation type="journal article" date="2004" name="Proc. Natl. Acad. Sci. U.S.A.">
        <title>Nav1.5 E1053K mutation causing Brugada syndrome blocks binding to ankyrin-G and expression of Nav1.5 on the surface of cardiomyocytes.</title>
        <authorList>
            <person name="Mohler P.J."/>
            <person name="Rivolta I."/>
            <person name="Napolitano C."/>
            <person name="LeMaillet G."/>
            <person name="Lambert S."/>
            <person name="Priori S.G."/>
            <person name="Bennett V."/>
        </authorList>
    </citation>
    <scope>INTERACTION WITH SCN5A</scope>
</reference>
<reference key="8">
    <citation type="journal article" date="2005" name="J. Biol. Chem.">
        <title>The ammonium transporter RhBG: requirement of a tyrosine-based signal and ankyrin-G for basolateral targeting and membrane anchorage in polarized kidney epithelial cells.</title>
        <authorList>
            <person name="Lopez C."/>
            <person name="Metral S."/>
            <person name="Eladari D."/>
            <person name="Drevensek S."/>
            <person name="Gane P."/>
            <person name="Chambrey R."/>
            <person name="Bennett V."/>
            <person name="Cartron J.-P."/>
            <person name="Le Van Kim C."/>
            <person name="Colin Y."/>
        </authorList>
    </citation>
    <scope>INTERACTION WITH RHBG</scope>
</reference>
<reference key="9">
    <citation type="journal article" date="2011" name="BMC Syst. Biol.">
        <title>Initial characterization of the human central proteome.</title>
        <authorList>
            <person name="Burkard T.R."/>
            <person name="Planyavsky M."/>
            <person name="Kaupe I."/>
            <person name="Breitwieser F.P."/>
            <person name="Buerckstuemmer T."/>
            <person name="Bennett K.L."/>
            <person name="Superti-Furga G."/>
            <person name="Colinge J."/>
        </authorList>
    </citation>
    <scope>IDENTIFICATION BY MASS SPECTROMETRY [LARGE SCALE ANALYSIS]</scope>
</reference>
<reference key="10">
    <citation type="journal article" date="2011" name="Exp. Cell Res.">
        <title>Novel interactions of ankyrins-G at the costameres: the muscle-specific Obscurin/Titin-Binding-related Domain (OTBD) binds plectin and filamin C.</title>
        <authorList>
            <person name="Maiweilidan Y."/>
            <person name="Klauza I."/>
            <person name="Kordeli E."/>
        </authorList>
    </citation>
    <scope>INTERACTION WITH PLEC AND FLNC</scope>
    <scope>SUBCELLULAR LOCATION</scope>
    <scope>TISSUE SPECIFICITY</scope>
    <scope>DEVELOPMENTAL STAGE</scope>
</reference>
<reference key="11">
    <citation type="journal article" date="2011" name="Sci. Signal.">
        <title>System-wide temporal characterization of the proteome and phosphoproteome of human embryonic stem cell differentiation.</title>
        <authorList>
            <person name="Rigbolt K.T."/>
            <person name="Prokhorova T.A."/>
            <person name="Akimov V."/>
            <person name="Henningsen J."/>
            <person name="Johansen P.T."/>
            <person name="Kratchmarova I."/>
            <person name="Kassem M."/>
            <person name="Mann M."/>
            <person name="Olsen J.V."/>
            <person name="Blagoev B."/>
        </authorList>
    </citation>
    <scope>PHOSPHORYLATION [LARGE SCALE ANALYSIS] AT SER-39; SER-847; SER-1445 AND SER-4298</scope>
    <scope>IDENTIFICATION BY MASS SPECTROMETRY [LARGE SCALE ANALYSIS]</scope>
</reference>
<reference key="12">
    <citation type="journal article" date="2013" name="J. Proteome Res.">
        <title>Toward a comprehensive characterization of a human cancer cell phosphoproteome.</title>
        <authorList>
            <person name="Zhou H."/>
            <person name="Di Palma S."/>
            <person name="Preisinger C."/>
            <person name="Peng M."/>
            <person name="Polat A.N."/>
            <person name="Heck A.J."/>
            <person name="Mohammed S."/>
        </authorList>
    </citation>
    <scope>PHOSPHORYLATION [LARGE SCALE ANALYSIS] AT SER-1459; SER-4298 AND SER-4350</scope>
    <scope>IDENTIFICATION BY MASS SPECTROMETRY [LARGE SCALE ANALYSIS]</scope>
    <source>
        <tissue>Cervix carcinoma</tissue>
        <tissue>Erythroleukemia</tissue>
    </source>
</reference>
<reference key="13">
    <citation type="journal article" date="2014" name="J. Proteomics">
        <title>An enzyme assisted RP-RPLC approach for in-depth analysis of human liver phosphoproteome.</title>
        <authorList>
            <person name="Bian Y."/>
            <person name="Song C."/>
            <person name="Cheng K."/>
            <person name="Dong M."/>
            <person name="Wang F."/>
            <person name="Huang J."/>
            <person name="Sun D."/>
            <person name="Wang L."/>
            <person name="Ye M."/>
            <person name="Zou H."/>
        </authorList>
    </citation>
    <scope>PHOSPHORYLATION [LARGE SCALE ANALYSIS] AT SER-4229; SER-4290 AND SER-4298</scope>
    <scope>PHOSPHORYLATION [LARGE SCALE ANALYSIS] AT SER-1632 AND SER-1658 (ISOFORM 2)</scope>
    <scope>PHOSPHORYLATION [LARGE SCALE ANALYSIS] AT SER-1625 AND SER-1651 (ISOFORM 3)</scope>
    <scope>PHOSPHORYLATION [LARGE SCALE ANALYSIS] AT SER-765 AND SER-791 (ISOFORM 4)</scope>
    <scope>PHOSPHORYLATION [LARGE SCALE ANALYSIS] AT SER-468 (ISOFORM 5)</scope>
    <scope>IDENTIFICATION BY MASS SPECTROMETRY [LARGE SCALE ANALYSIS]</scope>
    <source>
        <tissue>Liver</tissue>
    </source>
</reference>
<reference key="14">
    <citation type="journal article" date="2014" name="Kidney Int.">
        <title>Ankyrin-3 is a novel binding partner of the voltage-gated potassium channel Kv1.1 implicated in renal magnesium handling.</title>
        <authorList>
            <person name="San-Cristobal P."/>
            <person name="Lainez S."/>
            <person name="Dimke H."/>
            <person name="de Graaf M.J."/>
            <person name="Hoenderop J.G."/>
            <person name="Bindels R.J."/>
        </authorList>
    </citation>
    <scope>INTERACTION WITH KCNA1</scope>
</reference>
<reference key="15">
    <citation type="journal article" date="2015" name="J. Neurochem.">
        <title>CK2-regulated schwannomin-interacting protein IQCJ-SCHIP-1 association with AnkG contributes to the maintenance of the axon initial segment.</title>
        <authorList>
            <person name="Papandreou M.J."/>
            <person name="Vacher H."/>
            <person name="Fache M.P."/>
            <person name="Klingler E."/>
            <person name="Rueda-Boroni F."/>
            <person name="Ferracci G."/>
            <person name="Debarnot C."/>
            <person name="Piperoglou C."/>
            <person name="Garcia Del Cano G."/>
            <person name="Goutebroze L."/>
            <person name="Dargent B."/>
        </authorList>
    </citation>
    <scope>INTERACTION WITH IQCJ-SCHIP1 AND SCHIP1</scope>
</reference>
<reference key="16">
    <citation type="journal article" date="2016" name="Eur. J. Hum. Genet.">
        <title>A novel phenotype in N-glycosylation disorders: Gillessen-Kaesbach-Nishimura skeletal dysplasia due to pathogenic variants in ALG9.</title>
        <authorList>
            <person name="Tham E."/>
            <person name="Eklund E.A."/>
            <person name="Hammarsjoe A."/>
            <person name="Bengtson P."/>
            <person name="Geiberger S."/>
            <person name="Lagerstedt-Robinson K."/>
            <person name="Malmgren H."/>
            <person name="Nilsson D."/>
            <person name="Grigelionis G."/>
            <person name="Conner P."/>
            <person name="Lindgren P."/>
            <person name="Lindstrand A."/>
            <person name="Wedell A."/>
            <person name="Albaage M."/>
            <person name="Zielinska K."/>
            <person name="Nordgren A."/>
            <person name="Papadogiannakis N."/>
            <person name="Nishimura G."/>
            <person name="Grigelioniene G."/>
        </authorList>
    </citation>
    <scope>VARIANT HIS-968</scope>
</reference>
<reference key="17">
    <citation type="journal article" date="2014" name="Proteins">
        <title>Crystal structure of human Ankyrin G death domain.</title>
        <authorList>
            <person name="Liu Y."/>
            <person name="Zhang Y."/>
            <person name="Wang J.H."/>
        </authorList>
    </citation>
    <scope>X-RAY CRYSTALLOGRAPHY (2.10 ANGSTROMS) OF 4088-4199</scope>
</reference>
<reference key="18">
    <citation type="journal article" date="2012" name="Hum. Mutat.">
        <title>Mutations of ANK3 identified by exome sequencing are associated with autism susceptibility.</title>
        <authorList>
            <person name="Bi C."/>
            <person name="Wu J."/>
            <person name="Jiang T."/>
            <person name="Liu Q."/>
            <person name="Cai W."/>
            <person name="Yu P."/>
            <person name="Cai T."/>
            <person name="Zhao M."/>
            <person name="Jiang Y.H."/>
            <person name="Sun Z.S."/>
        </authorList>
    </citation>
    <scope>VARIANTS ALA-1569; MET-3720 AND PRO-4255</scope>
    <scope>POSSIBLE INVOLVEMENT IN SUSCEPTIBILITY TO AUTISM</scope>
</reference>
<reference key="19">
    <citation type="journal article" date="2013" name="Hum. Mol. Genet.">
        <title>Homozygous and heterozygous disruptions of ANK3: at the crossroads of neurodevelopmental and psychiatric disorders.</title>
        <authorList>
            <person name="Iqbal Z."/>
            <person name="Vandeweyer G."/>
            <person name="van der Voet M."/>
            <person name="Waryah A.M."/>
            <person name="Zahoor M.Y."/>
            <person name="Besseling J.A."/>
            <person name="Roca L.T."/>
            <person name="Vulto-van Silfhout A.T."/>
            <person name="Nijhof B."/>
            <person name="Kramer J.M."/>
            <person name="Van der Aa N."/>
            <person name="Ansar M."/>
            <person name="Peeters H."/>
            <person name="Helsmoortel C."/>
            <person name="Gilissen C."/>
            <person name="Vissers L.E."/>
            <person name="Veltman J.A."/>
            <person name="de Brouwer A.P."/>
            <person name="Frank Kooy R."/>
            <person name="Riazuddin S."/>
            <person name="Schenck A."/>
            <person name="van Bokhoven H."/>
            <person name="Rooms L."/>
        </authorList>
    </citation>
    <scope>INVOLVEMENT IN MRT37</scope>
</reference>
<proteinExistence type="evidence at protein level"/>
<keyword id="KW-0002">3D-structure</keyword>
<keyword id="KW-0025">Alternative splicing</keyword>
<keyword id="KW-0040">ANK repeat</keyword>
<keyword id="KW-1268">Autism spectrum disorder</keyword>
<keyword id="KW-1003">Cell membrane</keyword>
<keyword id="KW-0966">Cell projection</keyword>
<keyword id="KW-0963">Cytoplasm</keyword>
<keyword id="KW-0206">Cytoskeleton</keyword>
<keyword id="KW-0333">Golgi apparatus</keyword>
<keyword id="KW-0991">Intellectual disability</keyword>
<keyword id="KW-0458">Lysosome</keyword>
<keyword id="KW-0472">Membrane</keyword>
<keyword id="KW-0597">Phosphoprotein</keyword>
<keyword id="KW-0628">Postsynaptic cell membrane</keyword>
<keyword id="KW-1267">Proteomics identification</keyword>
<keyword id="KW-1185">Reference proteome</keyword>
<keyword id="KW-0677">Repeat</keyword>
<keyword id="KW-0770">Synapse</keyword>
<dbReference type="EMBL" id="U13616">
    <property type="protein sequence ID" value="AAA64834.1"/>
    <property type="molecule type" value="mRNA"/>
</dbReference>
<dbReference type="EMBL" id="U43965">
    <property type="protein sequence ID" value="AAB08437.1"/>
    <property type="molecule type" value="mRNA"/>
</dbReference>
<dbReference type="EMBL" id="AL136710">
    <property type="protein sequence ID" value="CAB66645.1"/>
    <property type="status" value="ALT_FRAME"/>
    <property type="molecule type" value="mRNA"/>
</dbReference>
<dbReference type="EMBL" id="AK295661">
    <property type="protein sequence ID" value="BAG58523.1"/>
    <property type="molecule type" value="mRNA"/>
</dbReference>
<dbReference type="EMBL" id="BX537917">
    <property type="protein sequence ID" value="CAD97900.2"/>
    <property type="molecule type" value="mRNA"/>
</dbReference>
<dbReference type="EMBL" id="BX648574">
    <property type="protein sequence ID" value="CAI56716.1"/>
    <property type="molecule type" value="mRNA"/>
</dbReference>
<dbReference type="EMBL" id="AC022390">
    <property type="status" value="NOT_ANNOTATED_CDS"/>
    <property type="molecule type" value="Genomic_DNA"/>
</dbReference>
<dbReference type="EMBL" id="AC023904">
    <property type="status" value="NOT_ANNOTATED_CDS"/>
    <property type="molecule type" value="Genomic_DNA"/>
</dbReference>
<dbReference type="EMBL" id="AL359267">
    <property type="status" value="NOT_ANNOTATED_CDS"/>
    <property type="molecule type" value="Genomic_DNA"/>
</dbReference>
<dbReference type="EMBL" id="AL359377">
    <property type="status" value="NOT_ANNOTATED_CDS"/>
    <property type="molecule type" value="Genomic_DNA"/>
</dbReference>
<dbReference type="EMBL" id="AL391707">
    <property type="status" value="NOT_ANNOTATED_CDS"/>
    <property type="molecule type" value="Genomic_DNA"/>
</dbReference>
<dbReference type="EMBL" id="AL592430">
    <property type="status" value="NOT_ANNOTATED_CDS"/>
    <property type="molecule type" value="Genomic_DNA"/>
</dbReference>
<dbReference type="EMBL" id="AL607065">
    <property type="status" value="NOT_ANNOTATED_CDS"/>
    <property type="molecule type" value="Genomic_DNA"/>
</dbReference>
<dbReference type="CCDS" id="CCDS55711.1">
    <molecule id="Q12955-4"/>
</dbReference>
<dbReference type="CCDS" id="CCDS55712.1">
    <molecule id="Q12955-5"/>
</dbReference>
<dbReference type="CCDS" id="CCDS7258.1">
    <molecule id="Q12955-3"/>
</dbReference>
<dbReference type="CCDS" id="CCDS7259.1">
    <molecule id="Q12955-6"/>
</dbReference>
<dbReference type="PIR" id="A55575">
    <property type="entry name" value="A55575"/>
</dbReference>
<dbReference type="RefSeq" id="NP_001140.2">
    <molecule id="Q12955-6"/>
    <property type="nucleotide sequence ID" value="NM_001149.3"/>
</dbReference>
<dbReference type="RefSeq" id="NP_001191332.1">
    <molecule id="Q12955-5"/>
    <property type="nucleotide sequence ID" value="NM_001204403.2"/>
</dbReference>
<dbReference type="RefSeq" id="NP_001191333.1">
    <molecule id="Q12955-4"/>
    <property type="nucleotide sequence ID" value="NM_001204404.2"/>
</dbReference>
<dbReference type="RefSeq" id="NP_066267.2">
    <molecule id="Q12955-3"/>
    <property type="nucleotide sequence ID" value="NM_020987.4"/>
</dbReference>
<dbReference type="PDB" id="4O6X">
    <property type="method" value="X-ray"/>
    <property type="resolution" value="2.10 A"/>
    <property type="chains" value="A/B=4088-4199"/>
</dbReference>
<dbReference type="PDBsum" id="4O6X"/>
<dbReference type="EMDB" id="EMD-21537"/>
<dbReference type="EMDB" id="EMD-21538"/>
<dbReference type="SMR" id="Q12955"/>
<dbReference type="BioGRID" id="106785">
    <property type="interactions" value="186"/>
</dbReference>
<dbReference type="CORUM" id="Q12955"/>
<dbReference type="DIP" id="DIP-49017N"/>
<dbReference type="ELM" id="Q12955"/>
<dbReference type="FunCoup" id="Q12955">
    <property type="interactions" value="779"/>
</dbReference>
<dbReference type="IntAct" id="Q12955">
    <property type="interactions" value="73"/>
</dbReference>
<dbReference type="MINT" id="Q12955"/>
<dbReference type="STRING" id="9606.ENSP00000280772"/>
<dbReference type="TCDB" id="8.A.28.1.9">
    <property type="family name" value="the ankyrin (ankyrin) family"/>
</dbReference>
<dbReference type="GlyCosmos" id="Q12955">
    <property type="glycosylation" value="45 sites, 1 glycan"/>
</dbReference>
<dbReference type="GlyGen" id="Q12955">
    <property type="glycosylation" value="49 sites, 1 O-linked glycan (49 sites)"/>
</dbReference>
<dbReference type="iPTMnet" id="Q12955"/>
<dbReference type="PhosphoSitePlus" id="Q12955"/>
<dbReference type="SwissPalm" id="Q12955"/>
<dbReference type="BioMuta" id="ANK3"/>
<dbReference type="DMDM" id="257051061"/>
<dbReference type="jPOST" id="Q12955"/>
<dbReference type="MassIVE" id="Q12955"/>
<dbReference type="PaxDb" id="9606-ENSP00000280772"/>
<dbReference type="PeptideAtlas" id="Q12955"/>
<dbReference type="ProteomicsDB" id="19802"/>
<dbReference type="ProteomicsDB" id="3339"/>
<dbReference type="ProteomicsDB" id="59048">
    <molecule id="Q12955-3"/>
</dbReference>
<dbReference type="Pumba" id="Q12955"/>
<dbReference type="ABCD" id="Q12955">
    <property type="antibodies" value="6 sequenced antibodies"/>
</dbReference>
<dbReference type="Antibodypedia" id="4197">
    <property type="antibodies" value="293 antibodies from 29 providers"/>
</dbReference>
<dbReference type="DNASU" id="288"/>
<dbReference type="Ensembl" id="ENST00000280772.7">
    <molecule id="Q12955-3"/>
    <property type="protein sequence ID" value="ENSP00000280772.1"/>
    <property type="gene ID" value="ENSG00000151150.22"/>
</dbReference>
<dbReference type="Ensembl" id="ENST00000355288.6">
    <molecule id="Q12955-6"/>
    <property type="protein sequence ID" value="ENSP00000347436.2"/>
    <property type="gene ID" value="ENSG00000151150.22"/>
</dbReference>
<dbReference type="Ensembl" id="ENST00000373827.6">
    <molecule id="Q12955-5"/>
    <property type="protein sequence ID" value="ENSP00000362933.2"/>
    <property type="gene ID" value="ENSG00000151150.22"/>
</dbReference>
<dbReference type="Ensembl" id="ENST00000503366.6">
    <molecule id="Q12955-4"/>
    <property type="protein sequence ID" value="ENSP00000425236.1"/>
    <property type="gene ID" value="ENSG00000151150.22"/>
</dbReference>
<dbReference type="GeneID" id="288"/>
<dbReference type="KEGG" id="hsa:288"/>
<dbReference type="MANE-Select" id="ENST00000280772.7">
    <property type="protein sequence ID" value="ENSP00000280772.1"/>
    <property type="RefSeq nucleotide sequence ID" value="NM_020987.5"/>
    <property type="RefSeq protein sequence ID" value="NP_066267.2"/>
</dbReference>
<dbReference type="UCSC" id="uc001jkw.4">
    <molecule id="Q12955-3"/>
    <property type="organism name" value="human"/>
</dbReference>
<dbReference type="AGR" id="HGNC:494"/>
<dbReference type="CTD" id="288"/>
<dbReference type="DisGeNET" id="288"/>
<dbReference type="GeneCards" id="ANK3"/>
<dbReference type="HGNC" id="HGNC:494">
    <property type="gene designation" value="ANK3"/>
</dbReference>
<dbReference type="HPA" id="ENSG00000151150">
    <property type="expression patterns" value="Low tissue specificity"/>
</dbReference>
<dbReference type="MalaCards" id="ANK3"/>
<dbReference type="MIM" id="600465">
    <property type="type" value="gene"/>
</dbReference>
<dbReference type="MIM" id="615493">
    <property type="type" value="phenotype"/>
</dbReference>
<dbReference type="neXtProt" id="NX_Q12955"/>
<dbReference type="NIAGADS" id="ENSG00000151150"/>
<dbReference type="OpenTargets" id="ENSG00000151150"/>
<dbReference type="Orphanet" id="356996">
    <property type="disease" value="ANK3-related intellectual disability-sleep disturbance syndrome"/>
</dbReference>
<dbReference type="PharmGKB" id="PA24800"/>
<dbReference type="VEuPathDB" id="HostDB:ENSG00000151150"/>
<dbReference type="eggNOG" id="KOG4177">
    <property type="taxonomic scope" value="Eukaryota"/>
</dbReference>
<dbReference type="GeneTree" id="ENSGT00940000154939"/>
<dbReference type="HOGENOM" id="CLU_000134_29_1_1"/>
<dbReference type="InParanoid" id="Q12955"/>
<dbReference type="OrthoDB" id="20872at2759"/>
<dbReference type="PAN-GO" id="Q12955">
    <property type="GO annotations" value="6 GO annotations based on evolutionary models"/>
</dbReference>
<dbReference type="PhylomeDB" id="Q12955"/>
<dbReference type="TreeFam" id="TF351263"/>
<dbReference type="PathwayCommons" id="Q12955"/>
<dbReference type="Reactome" id="R-HSA-445095">
    <property type="pathway name" value="Interaction between L1 and Ankyrins"/>
</dbReference>
<dbReference type="Reactome" id="R-HSA-6807878">
    <property type="pathway name" value="COPI-mediated anterograde transport"/>
</dbReference>
<dbReference type="SignaLink" id="Q12955"/>
<dbReference type="SIGNOR" id="Q12955"/>
<dbReference type="BioGRID-ORCS" id="288">
    <property type="hits" value="13 hits in 1166 CRISPR screens"/>
</dbReference>
<dbReference type="CD-CODE" id="232F8A39">
    <property type="entry name" value="P-body"/>
</dbReference>
<dbReference type="CD-CODE" id="FB4E32DD">
    <property type="entry name" value="Presynaptic clusters and postsynaptic densities"/>
</dbReference>
<dbReference type="ChiTaRS" id="ANK3">
    <property type="organism name" value="human"/>
</dbReference>
<dbReference type="EvolutionaryTrace" id="Q12955"/>
<dbReference type="GeneWiki" id="ANK3"/>
<dbReference type="GenomeRNAi" id="288"/>
<dbReference type="Pharos" id="Q12955">
    <property type="development level" value="Tbio"/>
</dbReference>
<dbReference type="PRO" id="PR:Q12955"/>
<dbReference type="Proteomes" id="UP000005640">
    <property type="component" value="Chromosome 10"/>
</dbReference>
<dbReference type="RNAct" id="Q12955">
    <property type="molecule type" value="protein"/>
</dbReference>
<dbReference type="Bgee" id="ENSG00000151150">
    <property type="expression patterns" value="Expressed in endothelial cell and 209 other cell types or tissues"/>
</dbReference>
<dbReference type="ExpressionAtlas" id="Q12955">
    <property type="expression patterns" value="baseline and differential"/>
</dbReference>
<dbReference type="GO" id="GO:0043194">
    <property type="term" value="C:axon initial segment"/>
    <property type="evidence" value="ECO:0000314"/>
    <property type="project" value="CAFA"/>
</dbReference>
<dbReference type="GO" id="GO:0009925">
    <property type="term" value="C:basal plasma membrane"/>
    <property type="evidence" value="ECO:0000314"/>
    <property type="project" value="BHF-UCL"/>
</dbReference>
<dbReference type="GO" id="GO:0016323">
    <property type="term" value="C:basolateral plasma membrane"/>
    <property type="evidence" value="ECO:0000314"/>
    <property type="project" value="UniProtKB"/>
</dbReference>
<dbReference type="GO" id="GO:0009986">
    <property type="term" value="C:cell surface"/>
    <property type="evidence" value="ECO:0000250"/>
    <property type="project" value="BHF-UCL"/>
</dbReference>
<dbReference type="GO" id="GO:0043034">
    <property type="term" value="C:costamere"/>
    <property type="evidence" value="ECO:0000304"/>
    <property type="project" value="BHF-UCL"/>
</dbReference>
<dbReference type="GO" id="GO:0005829">
    <property type="term" value="C:cytosol"/>
    <property type="evidence" value="ECO:0000304"/>
    <property type="project" value="Reactome"/>
</dbReference>
<dbReference type="GO" id="GO:0030425">
    <property type="term" value="C:dendrite"/>
    <property type="evidence" value="ECO:0000250"/>
    <property type="project" value="BHF-UCL"/>
</dbReference>
<dbReference type="GO" id="GO:0005783">
    <property type="term" value="C:endoplasmic reticulum"/>
    <property type="evidence" value="ECO:0000304"/>
    <property type="project" value="ProtInc"/>
</dbReference>
<dbReference type="GO" id="GO:0005794">
    <property type="term" value="C:Golgi apparatus"/>
    <property type="evidence" value="ECO:0000304"/>
    <property type="project" value="ProtInc"/>
</dbReference>
<dbReference type="GO" id="GO:0014704">
    <property type="term" value="C:intercalated disc"/>
    <property type="evidence" value="ECO:0000250"/>
    <property type="project" value="BHF-UCL"/>
</dbReference>
<dbReference type="GO" id="GO:0016328">
    <property type="term" value="C:lateral plasma membrane"/>
    <property type="evidence" value="ECO:0000314"/>
    <property type="project" value="BHF-UCL"/>
</dbReference>
<dbReference type="GO" id="GO:0005764">
    <property type="term" value="C:lysosome"/>
    <property type="evidence" value="ECO:0007669"/>
    <property type="project" value="UniProtKB-SubCell"/>
</dbReference>
<dbReference type="GO" id="GO:0031594">
    <property type="term" value="C:neuromuscular junction"/>
    <property type="evidence" value="ECO:0000250"/>
    <property type="project" value="BHF-UCL"/>
</dbReference>
<dbReference type="GO" id="GO:0043005">
    <property type="term" value="C:neuron projection"/>
    <property type="evidence" value="ECO:0000250"/>
    <property type="project" value="BHF-UCL"/>
</dbReference>
<dbReference type="GO" id="GO:0033268">
    <property type="term" value="C:node of Ranvier"/>
    <property type="evidence" value="ECO:0000250"/>
    <property type="project" value="ARUK-UCL"/>
</dbReference>
<dbReference type="GO" id="GO:0005886">
    <property type="term" value="C:plasma membrane"/>
    <property type="evidence" value="ECO:0000314"/>
    <property type="project" value="HPA"/>
</dbReference>
<dbReference type="GO" id="GO:0045211">
    <property type="term" value="C:postsynaptic membrane"/>
    <property type="evidence" value="ECO:0000250"/>
    <property type="project" value="BHF-UCL"/>
</dbReference>
<dbReference type="GO" id="GO:0042383">
    <property type="term" value="C:sarcolemma"/>
    <property type="evidence" value="ECO:0000314"/>
    <property type="project" value="BHF-UCL"/>
</dbReference>
<dbReference type="GO" id="GO:0016529">
    <property type="term" value="C:sarcoplasmic reticulum"/>
    <property type="evidence" value="ECO:0000250"/>
    <property type="project" value="BHF-UCL"/>
</dbReference>
<dbReference type="GO" id="GO:0014731">
    <property type="term" value="C:spectrin-associated cytoskeleton"/>
    <property type="evidence" value="ECO:0000250"/>
    <property type="project" value="BHF-UCL"/>
</dbReference>
<dbReference type="GO" id="GO:0030315">
    <property type="term" value="C:T-tubule"/>
    <property type="evidence" value="ECO:0000250"/>
    <property type="project" value="BHF-UCL"/>
</dbReference>
<dbReference type="GO" id="GO:0030018">
    <property type="term" value="C:Z disc"/>
    <property type="evidence" value="ECO:0000250"/>
    <property type="project" value="BHF-UCL"/>
</dbReference>
<dbReference type="GO" id="GO:0045296">
    <property type="term" value="F:cadherin binding"/>
    <property type="evidence" value="ECO:0000250"/>
    <property type="project" value="BHF-UCL"/>
</dbReference>
<dbReference type="GO" id="GO:0099103">
    <property type="term" value="F:channel activator activity"/>
    <property type="evidence" value="ECO:0000250"/>
    <property type="project" value="BHF-UCL"/>
</dbReference>
<dbReference type="GO" id="GO:0008093">
    <property type="term" value="F:cytoskeletal anchor activity"/>
    <property type="evidence" value="ECO:0000318"/>
    <property type="project" value="GO_Central"/>
</dbReference>
<dbReference type="GO" id="GO:0008092">
    <property type="term" value="F:cytoskeletal protein binding"/>
    <property type="evidence" value="ECO:0000250"/>
    <property type="project" value="BHF-UCL"/>
</dbReference>
<dbReference type="GO" id="GO:0030674">
    <property type="term" value="F:protein-macromolecule adaptor activity"/>
    <property type="evidence" value="ECO:0000250"/>
    <property type="project" value="BHF-UCL"/>
</dbReference>
<dbReference type="GO" id="GO:0017080">
    <property type="term" value="F:sodium channel regulator activity"/>
    <property type="evidence" value="ECO:0000250"/>
    <property type="project" value="BHF-UCL"/>
</dbReference>
<dbReference type="GO" id="GO:0030507">
    <property type="term" value="F:spectrin binding"/>
    <property type="evidence" value="ECO:0000250"/>
    <property type="project" value="BHF-UCL"/>
</dbReference>
<dbReference type="GO" id="GO:0005200">
    <property type="term" value="F:structural constituent of cytoskeleton"/>
    <property type="evidence" value="ECO:0000315"/>
    <property type="project" value="BHF-UCL"/>
</dbReference>
<dbReference type="GO" id="GO:0044325">
    <property type="term" value="F:transmembrane transporter binding"/>
    <property type="evidence" value="ECO:0000250"/>
    <property type="project" value="BHF-UCL"/>
</dbReference>
<dbReference type="GO" id="GO:0007409">
    <property type="term" value="P:axonogenesis"/>
    <property type="evidence" value="ECO:0000250"/>
    <property type="project" value="BHF-UCL"/>
</dbReference>
<dbReference type="GO" id="GO:0071286">
    <property type="term" value="P:cellular response to magnesium ion"/>
    <property type="evidence" value="ECO:0000250"/>
    <property type="project" value="UniProtKB"/>
</dbReference>
<dbReference type="GO" id="GO:0045184">
    <property type="term" value="P:establishment of protein localization"/>
    <property type="evidence" value="ECO:0000315"/>
    <property type="project" value="UniProtKB"/>
</dbReference>
<dbReference type="GO" id="GO:0043001">
    <property type="term" value="P:Golgi to plasma membrane protein transport"/>
    <property type="evidence" value="ECO:0000315"/>
    <property type="project" value="BHF-UCL"/>
</dbReference>
<dbReference type="GO" id="GO:0010960">
    <property type="term" value="P:magnesium ion homeostasis"/>
    <property type="evidence" value="ECO:0000250"/>
    <property type="project" value="UniProtKB"/>
</dbReference>
<dbReference type="GO" id="GO:0072660">
    <property type="term" value="P:maintenance of protein location in plasma membrane"/>
    <property type="evidence" value="ECO:0000316"/>
    <property type="project" value="BHF-UCL"/>
</dbReference>
<dbReference type="GO" id="GO:0071709">
    <property type="term" value="P:membrane assembly"/>
    <property type="evidence" value="ECO:0000315"/>
    <property type="project" value="BHF-UCL"/>
</dbReference>
<dbReference type="GO" id="GO:0000281">
    <property type="term" value="P:mitotic cytokinesis"/>
    <property type="evidence" value="ECO:0000315"/>
    <property type="project" value="BHF-UCL"/>
</dbReference>
<dbReference type="GO" id="GO:1902260">
    <property type="term" value="P:negative regulation of delayed rectifier potassium channel activity"/>
    <property type="evidence" value="ECO:0000250"/>
    <property type="project" value="UniProtKB"/>
</dbReference>
<dbReference type="GO" id="GO:0007528">
    <property type="term" value="P:neuromuscular junction development"/>
    <property type="evidence" value="ECO:0000250"/>
    <property type="project" value="BHF-UCL"/>
</dbReference>
<dbReference type="GO" id="GO:0019228">
    <property type="term" value="P:neuronal action potential"/>
    <property type="evidence" value="ECO:0000250"/>
    <property type="project" value="BHF-UCL"/>
</dbReference>
<dbReference type="GO" id="GO:0007009">
    <property type="term" value="P:plasma membrane organization"/>
    <property type="evidence" value="ECO:0000315"/>
    <property type="project" value="BHF-UCL"/>
</dbReference>
<dbReference type="GO" id="GO:0010650">
    <property type="term" value="P:positive regulation of cell communication by electrical coupling"/>
    <property type="evidence" value="ECO:0000250"/>
    <property type="project" value="BHF-UCL"/>
</dbReference>
<dbReference type="GO" id="GO:0010628">
    <property type="term" value="P:positive regulation of gene expression"/>
    <property type="evidence" value="ECO:0000250"/>
    <property type="project" value="BHF-UCL"/>
</dbReference>
<dbReference type="GO" id="GO:0034112">
    <property type="term" value="P:positive regulation of homotypic cell-cell adhesion"/>
    <property type="evidence" value="ECO:0000250"/>
    <property type="project" value="BHF-UCL"/>
</dbReference>
<dbReference type="GO" id="GO:1900827">
    <property type="term" value="P:positive regulation of membrane depolarization during cardiac muscle cell action potential"/>
    <property type="evidence" value="ECO:0000250"/>
    <property type="project" value="BHF-UCL"/>
</dbReference>
<dbReference type="GO" id="GO:0045838">
    <property type="term" value="P:positive regulation of membrane potential"/>
    <property type="evidence" value="ECO:0000250"/>
    <property type="project" value="BHF-UCL"/>
</dbReference>
<dbReference type="GO" id="GO:0090314">
    <property type="term" value="P:positive regulation of protein targeting to membrane"/>
    <property type="evidence" value="ECO:0000250"/>
    <property type="project" value="BHF-UCL"/>
</dbReference>
<dbReference type="GO" id="GO:0010765">
    <property type="term" value="P:positive regulation of sodium ion transport"/>
    <property type="evidence" value="ECO:0000250"/>
    <property type="project" value="BHF-UCL"/>
</dbReference>
<dbReference type="GO" id="GO:0099612">
    <property type="term" value="P:protein localization to axon"/>
    <property type="evidence" value="ECO:0000250"/>
    <property type="project" value="UniProtKB"/>
</dbReference>
<dbReference type="GO" id="GO:0072659">
    <property type="term" value="P:protein localization to plasma membrane"/>
    <property type="evidence" value="ECO:0000315"/>
    <property type="project" value="BHF-UCL"/>
</dbReference>
<dbReference type="GO" id="GO:0043266">
    <property type="term" value="P:regulation of potassium ion transport"/>
    <property type="evidence" value="ECO:0000250"/>
    <property type="project" value="BHF-UCL"/>
</dbReference>
<dbReference type="GO" id="GO:0007165">
    <property type="term" value="P:signal transduction"/>
    <property type="evidence" value="ECO:0007669"/>
    <property type="project" value="InterPro"/>
</dbReference>
<dbReference type="CDD" id="cd08803">
    <property type="entry name" value="Death_ank3"/>
    <property type="match status" value="1"/>
</dbReference>
<dbReference type="FunFam" id="1.25.40.20:FF:000003">
    <property type="entry name" value="Ankyrin, isoform B"/>
    <property type="match status" value="1"/>
</dbReference>
<dbReference type="FunFam" id="1.25.40.20:FF:000001">
    <property type="entry name" value="Ankyrin-2 isoform 2"/>
    <property type="match status" value="1"/>
</dbReference>
<dbReference type="FunFam" id="1.25.40.20:FF:000002">
    <property type="entry name" value="Ankyrin-2 isoform 2"/>
    <property type="match status" value="1"/>
</dbReference>
<dbReference type="FunFam" id="1.10.533.10:FF:000002">
    <property type="entry name" value="Ankyrin-3 isoform 2"/>
    <property type="match status" value="1"/>
</dbReference>
<dbReference type="FunFam" id="2.60.220.30:FF:000001">
    <property type="entry name" value="Ankyrin-3 isoform 2"/>
    <property type="match status" value="1"/>
</dbReference>
<dbReference type="FunFam" id="2.60.220.30:FF:000002">
    <property type="entry name" value="Ankyrin-3 isoform 2"/>
    <property type="match status" value="1"/>
</dbReference>
<dbReference type="FunFam" id="2.60.40.2660:FF:000001">
    <property type="entry name" value="Ankyrin-3 isoform 2"/>
    <property type="match status" value="1"/>
</dbReference>
<dbReference type="Gene3D" id="2.60.220.30">
    <property type="match status" value="2"/>
</dbReference>
<dbReference type="Gene3D" id="2.60.40.2660">
    <property type="match status" value="1"/>
</dbReference>
<dbReference type="Gene3D" id="1.25.40.20">
    <property type="entry name" value="Ankyrin repeat-containing domain"/>
    <property type="match status" value="3"/>
</dbReference>
<dbReference type="Gene3D" id="1.10.533.10">
    <property type="entry name" value="Death Domain, Fas"/>
    <property type="match status" value="1"/>
</dbReference>
<dbReference type="InterPro" id="IPR037971">
    <property type="entry name" value="Ank3_Death"/>
</dbReference>
<dbReference type="InterPro" id="IPR002110">
    <property type="entry name" value="Ankyrin_rpt"/>
</dbReference>
<dbReference type="InterPro" id="IPR036770">
    <property type="entry name" value="Ankyrin_rpt-contain_sf"/>
</dbReference>
<dbReference type="InterPro" id="IPR040745">
    <property type="entry name" value="Ankyrin_UPA"/>
</dbReference>
<dbReference type="InterPro" id="IPR011029">
    <property type="entry name" value="DEATH-like_dom_sf"/>
</dbReference>
<dbReference type="InterPro" id="IPR000488">
    <property type="entry name" value="Death_dom"/>
</dbReference>
<dbReference type="InterPro" id="IPR051165">
    <property type="entry name" value="Multifunctional_ANK_Repeat"/>
</dbReference>
<dbReference type="InterPro" id="IPR000906">
    <property type="entry name" value="ZU5_dom"/>
</dbReference>
<dbReference type="PANTHER" id="PTHR24123:SF74">
    <property type="entry name" value="ANKYRIN 3"/>
    <property type="match status" value="1"/>
</dbReference>
<dbReference type="PANTHER" id="PTHR24123">
    <property type="entry name" value="ANKYRIN REPEAT-CONTAINING"/>
    <property type="match status" value="1"/>
</dbReference>
<dbReference type="Pfam" id="PF00023">
    <property type="entry name" value="Ank"/>
    <property type="match status" value="3"/>
</dbReference>
<dbReference type="Pfam" id="PF12796">
    <property type="entry name" value="Ank_2"/>
    <property type="match status" value="7"/>
</dbReference>
<dbReference type="Pfam" id="PF13637">
    <property type="entry name" value="Ank_4"/>
    <property type="match status" value="1"/>
</dbReference>
<dbReference type="Pfam" id="PF00531">
    <property type="entry name" value="Death"/>
    <property type="match status" value="1"/>
</dbReference>
<dbReference type="Pfam" id="PF17809">
    <property type="entry name" value="UPA_2"/>
    <property type="match status" value="1"/>
</dbReference>
<dbReference type="Pfam" id="PF00791">
    <property type="entry name" value="ZU5"/>
    <property type="match status" value="1"/>
</dbReference>
<dbReference type="PRINTS" id="PR01415">
    <property type="entry name" value="ANKYRIN"/>
</dbReference>
<dbReference type="SMART" id="SM00248">
    <property type="entry name" value="ANK"/>
    <property type="match status" value="22"/>
</dbReference>
<dbReference type="SMART" id="SM00005">
    <property type="entry name" value="DEATH"/>
    <property type="match status" value="1"/>
</dbReference>
<dbReference type="SMART" id="SM00218">
    <property type="entry name" value="ZU5"/>
    <property type="match status" value="1"/>
</dbReference>
<dbReference type="SUPFAM" id="SSF48403">
    <property type="entry name" value="Ankyrin repeat"/>
    <property type="match status" value="3"/>
</dbReference>
<dbReference type="SUPFAM" id="SSF47986">
    <property type="entry name" value="DEATH domain"/>
    <property type="match status" value="1"/>
</dbReference>
<dbReference type="PROSITE" id="PS50297">
    <property type="entry name" value="ANK_REP_REGION"/>
    <property type="match status" value="1"/>
</dbReference>
<dbReference type="PROSITE" id="PS50088">
    <property type="entry name" value="ANK_REPEAT"/>
    <property type="match status" value="21"/>
</dbReference>
<dbReference type="PROSITE" id="PS50017">
    <property type="entry name" value="DEATH_DOMAIN"/>
    <property type="match status" value="1"/>
</dbReference>
<dbReference type="PROSITE" id="PS51145">
    <property type="entry name" value="ZU5"/>
    <property type="match status" value="2"/>
</dbReference>
<name>ANK3_HUMAN</name>
<protein>
    <recommendedName>
        <fullName evidence="20">Ankyrin-3</fullName>
        <shortName evidence="20">ANK-3</shortName>
    </recommendedName>
    <alternativeName>
        <fullName evidence="20">Ankyrin-G</fullName>
    </alternativeName>
</protein>
<organism>
    <name type="scientific">Homo sapiens</name>
    <name type="common">Human</name>
    <dbReference type="NCBI Taxonomy" id="9606"/>
    <lineage>
        <taxon>Eukaryota</taxon>
        <taxon>Metazoa</taxon>
        <taxon>Chordata</taxon>
        <taxon>Craniata</taxon>
        <taxon>Vertebrata</taxon>
        <taxon>Euteleostomi</taxon>
        <taxon>Mammalia</taxon>
        <taxon>Eutheria</taxon>
        <taxon>Euarchontoglires</taxon>
        <taxon>Primates</taxon>
        <taxon>Haplorrhini</taxon>
        <taxon>Catarrhini</taxon>
        <taxon>Hominidae</taxon>
        <taxon>Homo</taxon>
    </lineage>
</organism>
<sequence>MAHAASQLKKNRDLEINAEEEPEKKRKHRKRSRDRKKKSDANASYLRAARAGHLEKALDYIKNGVDINICNQNGLNALHLASKEGHVEVVSELLQREANVDAATKKGNTALHIASLAGQAEVVKVLVTNGANVNAQSQNGFTPLYMAAQENHLEVVKFLLDNGASQSLATEDGFTPLAVALQQGHDQVVSLLLENDTKGKVRLPALHIAARKDDTKAAALLLQNDNNADVESKSGFTPLHIAAHYGNINVATLLLNRAAAVDFTARNDITPLHVASKRGNANMVKLLLDRGAKIDAKTRDGLTPLHCGARSGHEQVVEMLLDRAAPILSKTKNGLSPLHMATQGDHLNCVQLLLQHNVPVDDVTNDYLTALHVAAHCGHYKVAKVLLDKKANPNAKALNGFTPLHIACKKNRIKVMELLLKHGASIQAVTESGLTPIHVAAFMGHVNIVSQLMHHGASPNTTNVRGETALHMAARSGQAEVVRYLVQDGAQVEAKAKDDQTPLHISARLGKADIVQQLLQQGASPNAATTSGYTPLHLSAREGHEDVAAFLLDHGASLSITTKKGFTPLHVAAKYGKLEVANLLLQKSASPDAAGKSGLTPLHVAAHYDNQKVALLLLDQGASPHAAAKNGYTPLHIAAKKNQMDIATTLLEYGADANAVTRQGIASVHLAAQEGHVDMVSLLLGRNANVNLSNKSGLTPLHLAAQEDRVNVAEVLVNQGAHVDAQTKMGYTPLHVGCHYGNIKIVNFLLQHSAKVNAKTKNGYTPLHQAAQQGHTHIINVLLQNNASPNELTVNGNTALGIARRLGYISVVDTLKIVTEETMTTTTVTEKHKMNVPETMNEVLDMSDDEVRKANAPEMLSDGEYISDVEEGEDAMTGDTDKYLGPQDLKELGDDSLPAEGYMGFSLGARSASLRSFSSDRSYTLNRSSYARDSMMIEELLVPSKEQHLTFTREFDSDSLRHYSWAADTLDNVNLVSSPIHSGFLVSFMVDARGGSMRGSRHHGMRIIIPPRKCTAPTRITCRLVKRHKLANPPPMVEGEGLASRLVEMGPAGAQFLGPVIVEIPHFGSMRGKERELIVLRSENGETWKEHQFDSKNEDLTELLNGMDEELDSPEELGKKRICRIITKDFPQYFAVVSRIKQESNQIGPEGGILSSTTVPLVQASFPEGALTKRIRVGLQAQPVPDEIVKKILGNKATFSPIVTVEPRRRKFHKPITMTIPVPPPSGEGVSNGYKGDTTPNLRLLCSITGGTSPAQWEDITGTTPLTFIKDCVSFTTNVSARFWLADCHQVLETVGLATQLYRELICVPYMAKFVVFAKMNDPVESSLRCFCMTDDKVDKTLEQQENFEEVARSKDIEVLEGKPIYVDCYGNLAPLTKGGQQLVFNFYSFKENRLPFSIKIRDTSQEPCGRLSFLKEPKTTKGLPQTAVCNLNITLPAHKKETESDQDDEIEKTDRRQSFASLALRKRYSYLTEPGMIERSTGATRSLPTTYSYKPFFSTRPYQSWTTAPITVPGPAKSGFTSLSSSSSNTPSASPLKSIWSVSTPSPIKSTLGASTTSSVKSISDVASPIRSFRTMSSPIKTVVSQSPYNIQVSSGTLARAPAVTEATPLKGLASNSTFSSRTSPVTTAGSLLERSSITMTPPASPKSNINMYSSSLPFKSIITSAAPLISSPLKSVVSPVKSAVDVISSAKITMASSLSSPVKQMPGHAEVALVNGSISPLKYPSSSTLINGCKATATLQEKISSATNSVSSVVSAATDTVEKVFSTTTAMPFSPLRSYVSAAPSAFQSLRTPSASALYTSLGSSISATTSSVTSSIITVPVYSVVNVLPEPALKKLPDSNSFTKSAAALLSPIKTLTTETHPQPHFSRTSSPVKSSLFLAPSALKLSTPSSLSSSQEILKDVAEMKEDLMRMTAILQTDVPEEKPFQPELPKEGRIDDEEPFKIVEKVKEDLVKVSEILKKDVCVDNKGSPKSPKSDKGHSPEDDWIEFSSEEIREARQQAAASQSPSLPERVQVKAKAASEKDYNLTKVIDYLTNDIGSSSLTNLKYKFEDAKKDGEERQKRVLKPAIALQEHKLKMPPASMRTSTSEKELCKMADSFFGTDTILESPDDFSQHDQDKSPLSDSGFETRSEKTPSAPQSAESTGPKPLFHEVPIPPVITETRTEVVHVIRSYDPSAGDVPQTQPEEPVSPKPSPTFMELEPKPTTSSIKEKVKAFQMKASSEEDDHNRVLSKGMRVKEETHITTTTRMVYHSPPGGEGASERIEETMSVHDIMKAFQSGRDPSKELAGLFEHKSAVSPDVHKSAAETSAQHAEKDNQMKPKLERIIEVHIEKGNQAEPTEVIIRETKKHPEKEMYVYQKDLSRGDINLKDFLPEKHDAFPCSEEQGQQEEEELTAEESLPSYLESSRVNTPVSQEEDSRPSSAQLISDDSYKTLKLLSQHSIEYHDDELSELRGESYRFAEKMLLSEKLDVSHSDTEESVTDHAGPPSSELQGSDKRSREKIATAPKKEILSKIYKDVSENGVGKVSKDEHFDKVTVLHYSGNVSSPKHAMWMRFTEDRLDRGREKLIYEDRVDRTVKEAEEKLTEVSQFFRDKTEKLNDELQSPEKKARPKNGKEYSSQSPTSSSPEKVLLTELLASNDEWVKARQHGPDGQGFPKAEEKAPSLPSSPEKMVLSQQTEDSKSTVEAKGSISQSKAPDGPQSGFQLKQSKLSSIRLKFEQGTHAKSKDMSQEDRKSDGQSRIPVKKIQESKLPVYQVFAREKQQKAIDLPDESVSVQKDFMVLKTKDEHAQSNEIVVNDSGSDNVKKQRTEMSSKAMPDSFSEQQAKDLACHITSDLATRGPWDKKVFRTWESSGATNNKSQKEKLSHVLVHDVRENHIGHPESKSVDQKNEFMSVTERERKLLTNGSLSEIKEMTVKSPSKKVLYREYVVKEGDHPGGLLDQPSRRSESSAVSHIPVRVADERRMLSSNIPDGFCEQSAFPKHELSQKLSQSSMSKETVETQHFNSIEDEKVTYSEISKVSKHQSYVGLCPPLEETETSPTKSPDSLEFSPGKESPSSDVFDHSPIDGLEKLAPLAQTEGGKEIKTLPVYVSFVQVGKQYEKEIQQGGVKKIISQECKTVQETRGTFYTTRQQKQPPSPQGSPEDDTLEQVSFLDSSGKSPLTPETPSSEEVSYEFTSKTPDSLIAYIPGKPSPIPEVSEESEEEEQAKSTSLKQTTVEETAVEREMPNDVSKDSNQRPKNNRVAYIEFPPPPPLDADQIESDKKHHYLPEKEVDMIEVNLQDEHDKYQLAEPVIRVQPPSPVPPGADVSDSSDDESIYQPVPVKKYTFKLKEVDDEQKEKPKASAEKASNQKELESNGSGKDNEFGLGLDSPQNEIAQNGNNDQSITECSIATTAEFSHDTDATEIDSLDGYDLQDEDDGLTESDSKLPIQAMEIKKDIWNTEGILKPADRSFSQSKLEVIEEEGKVGPDEDKPPSKSSSSEKTPDKTDQKSGAQFFTLEGRHPDRSVFPDTYFSYKVDEEFATPFKTVATKGLDFDPWSNNRGDDEVFDSKSREDETKPFGLAVEDRSPATTPDTTPARTPTDESTPTSEPNPFPFHEGKMFEMTRSGAIDMSKRDFVEERLQFFQIGEHTSEGKSGDQGEGDKSMVTATPQPQSGDTTVETNLERNVETPTVEPNPSIPTSGECQEGTSSSGSLEKSAAATNTSKVDPKLRTPIKMGISASTMTMKKEGPGEITDKIEAVMTSCQGLENETITMISNTANSQMGVRPHEKHDFQKDNFNNNNNLDSSTIQTDNIMSNIVLTEHSAPTCTTEKDNPVKVSSGKKTGVLQGHCVRDKQKVLGEQQKTKELIGIRQKSKLPIKATSPKDTFPPNHMSNTKASKMKQVSQSEKTKALTTSSCVDVKSRIPVKNTHRDNIIAVRKACATQKQGQPEKGKAKQLPSKLPVKVRSTCVTTTTTTATTTTTTTTTTTTSCTVKVRKSQLKEVCKHSIEYFKGISGETLKLVDRLSEEEKKMQSELSDEEESTSRNTSLSETSRGGQPSVTTKSARDKKTEAAPLKSKSEKAGSEKRSSRRTGPQSPCERTDIRMAIVADHLGLSWTELARELNFSVDEINQIRVENPNSLISQSFMLLKKWVTRDGKNATTDALTSVLTKINRIDIVTLLEGPIFDYGNISGTRSFADENNVFHDPVDGWQNETSSGNLESCAQARRVTGGLLDRLDDSPDQCRDSITSYLKGEAGKFEANGSHTEITPEAKTKSYFPESQNDVGKQSTKETLKPKIHGSGHVEEPASPLAAYQKSLEETSKLIIEETKPCVPVSMKKMSRTSPADGKPRLSLHEEEGSSGSEQKQGEGFKVKTKKEIRHVEKKSHS</sequence>
<gene>
    <name evidence="24" type="primary">ANK3</name>
</gene>